<proteinExistence type="evidence at protein level"/>
<keyword id="KW-0002">3D-structure</keyword>
<keyword id="KW-0007">Acetylation</keyword>
<keyword id="KW-0009">Actin-binding</keyword>
<keyword id="KW-0877">Alternative promoter usage</keyword>
<keyword id="KW-0025">Alternative splicing</keyword>
<keyword id="KW-0993">Aortic aneurysm</keyword>
<keyword id="KW-0067">ATP-binding</keyword>
<keyword id="KW-0106">Calcium</keyword>
<keyword id="KW-0112">Calmodulin-binding</keyword>
<keyword id="KW-0966">Cell projection</keyword>
<keyword id="KW-0963">Cytoplasm</keyword>
<keyword id="KW-0206">Cytoskeleton</keyword>
<keyword id="KW-0903">Direct protein sequencing</keyword>
<keyword id="KW-0225">Disease variant</keyword>
<keyword id="KW-1015">Disulfide bond</keyword>
<keyword id="KW-0393">Immunoglobulin domain</keyword>
<keyword id="KW-0418">Kinase</keyword>
<keyword id="KW-0460">Magnesium</keyword>
<keyword id="KW-0479">Metal-binding</keyword>
<keyword id="KW-0547">Nucleotide-binding</keyword>
<keyword id="KW-0597">Phosphoprotein</keyword>
<keyword id="KW-1267">Proteomics identification</keyword>
<keyword id="KW-1185">Reference proteome</keyword>
<keyword id="KW-0677">Repeat</keyword>
<keyword id="KW-0723">Serine/threonine-protein kinase</keyword>
<keyword id="KW-0808">Transferase</keyword>
<feature type="chain" id="PRO_0000024354" description="Myosin light chain kinase, smooth muscle">
    <location>
        <begin position="1"/>
        <end position="1914"/>
    </location>
</feature>
<feature type="chain" id="PRO_0000403731" description="Myosin light chain kinase, smooth muscle, deglutamylated form" evidence="1">
    <location>
        <begin position="1"/>
        <end position="1910"/>
    </location>
</feature>
<feature type="domain" description="Ig-like C2-type 1">
    <location>
        <begin position="33"/>
        <end position="122"/>
    </location>
</feature>
<feature type="domain" description="Ig-like C2-type 2">
    <location>
        <begin position="161"/>
        <end position="249"/>
    </location>
</feature>
<feature type="domain" description="Ig-like C2-type 3">
    <location>
        <begin position="414"/>
        <end position="503"/>
    </location>
</feature>
<feature type="domain" description="Ig-like C2-type 4">
    <location>
        <begin position="514"/>
        <end position="599"/>
    </location>
</feature>
<feature type="domain" description="Ig-like C2-type 5">
    <location>
        <begin position="620"/>
        <end position="711"/>
    </location>
</feature>
<feature type="domain" description="Ig-like C2-type 6">
    <location>
        <begin position="721"/>
        <end position="821"/>
    </location>
</feature>
<feature type="repeat" description="1-1">
    <location>
        <begin position="868"/>
        <end position="895"/>
    </location>
</feature>
<feature type="repeat" description="1-2">
    <location>
        <begin position="896"/>
        <end position="923"/>
    </location>
</feature>
<feature type="repeat" description="1-3">
    <location>
        <begin position="924"/>
        <end position="951"/>
    </location>
</feature>
<feature type="repeat" description="1-4">
    <location>
        <begin position="952"/>
        <end position="979"/>
    </location>
</feature>
<feature type="repeat" description="1-5; truncated">
    <location>
        <begin position="980"/>
        <end position="998"/>
    </location>
</feature>
<feature type="repeat" description="2-1; truncated">
    <location>
        <begin position="999"/>
        <end position="1003"/>
    </location>
</feature>
<feature type="repeat" description="2-2">
    <location>
        <begin position="1004"/>
        <end position="1015"/>
    </location>
</feature>
<feature type="repeat" description="2-3">
    <location>
        <begin position="1016"/>
        <end position="1027"/>
    </location>
</feature>
<feature type="repeat" description="2-4">
    <location>
        <begin position="1028"/>
        <end position="1039"/>
    </location>
</feature>
<feature type="repeat" description="2-5">
    <location>
        <begin position="1040"/>
        <end position="1051"/>
    </location>
</feature>
<feature type="repeat" description="2-6">
    <location>
        <begin position="1052"/>
        <end position="1063"/>
    </location>
</feature>
<feature type="domain" description="Ig-like C2-type 7">
    <location>
        <begin position="1098"/>
        <end position="1186"/>
    </location>
</feature>
<feature type="domain" description="Ig-like C2-type 8">
    <location>
        <begin position="1238"/>
        <end position="1326"/>
    </location>
</feature>
<feature type="domain" description="Fibronectin type-III" evidence="5">
    <location>
        <begin position="1334"/>
        <end position="1426"/>
    </location>
</feature>
<feature type="domain" description="Protein kinase" evidence="4">
    <location>
        <begin position="1464"/>
        <end position="1719"/>
    </location>
</feature>
<feature type="domain" description="Ig-like C2-type 9">
    <location>
        <begin position="1809"/>
        <end position="1898"/>
    </location>
</feature>
<feature type="region of interest" description="Disordered" evidence="7">
    <location>
        <begin position="286"/>
        <end position="393"/>
    </location>
</feature>
<feature type="region of interest" description="5 X 28 AA approximate tandem repeats">
    <location>
        <begin position="868"/>
        <end position="998"/>
    </location>
</feature>
<feature type="region of interest" description="Actin-binding (calcium/calmodulin-sensitive)" evidence="1">
    <location>
        <begin position="923"/>
        <end position="963"/>
    </location>
</feature>
<feature type="region of interest" description="Disordered" evidence="7">
    <location>
        <begin position="932"/>
        <end position="1098"/>
    </location>
</feature>
<feature type="region of interest" description="Calmodulin-binding" evidence="1">
    <location>
        <begin position="948"/>
        <end position="963"/>
    </location>
</feature>
<feature type="region of interest" description="6 X 12 AA approximate tandem repeats">
    <location>
        <begin position="999"/>
        <end position="1063"/>
    </location>
</feature>
<feature type="region of interest" description="Actin-binding (calcium/calmodulin-insensitive)" evidence="1">
    <location>
        <begin position="1061"/>
        <end position="1460"/>
    </location>
</feature>
<feature type="region of interest" description="Disordered" evidence="7">
    <location>
        <begin position="1192"/>
        <end position="1237"/>
    </location>
</feature>
<feature type="region of interest" description="Disordered" evidence="7">
    <location>
        <begin position="1413"/>
        <end position="1446"/>
    </location>
</feature>
<feature type="region of interest" description="Calmodulin-binding">
    <location>
        <begin position="1711"/>
        <end position="1774"/>
    </location>
</feature>
<feature type="region of interest" description="Disordered" evidence="7">
    <location>
        <begin position="1767"/>
        <end position="1787"/>
    </location>
</feature>
<feature type="compositionally biased region" description="Basic and acidic residues" evidence="7">
    <location>
        <begin position="318"/>
        <end position="329"/>
    </location>
</feature>
<feature type="compositionally biased region" description="Polar residues" evidence="7">
    <location>
        <begin position="331"/>
        <end position="347"/>
    </location>
</feature>
<feature type="compositionally biased region" description="Basic and acidic residues" evidence="7">
    <location>
        <begin position="1054"/>
        <end position="1077"/>
    </location>
</feature>
<feature type="compositionally biased region" description="Polar residues" evidence="7">
    <location>
        <begin position="1413"/>
        <end position="1422"/>
    </location>
</feature>
<feature type="compositionally biased region" description="Acidic residues" evidence="7">
    <location>
        <begin position="1431"/>
        <end position="1445"/>
    </location>
</feature>
<feature type="compositionally biased region" description="Polar residues" evidence="7">
    <location>
        <begin position="1770"/>
        <end position="1781"/>
    </location>
</feature>
<feature type="active site" description="Proton acceptor" evidence="4 6">
    <location>
        <position position="1585"/>
    </location>
</feature>
<feature type="binding site" evidence="4">
    <location>
        <begin position="1470"/>
        <end position="1478"/>
    </location>
    <ligand>
        <name>ATP</name>
        <dbReference type="ChEBI" id="CHEBI:30616"/>
    </ligand>
</feature>
<feature type="binding site" evidence="4">
    <location>
        <position position="1493"/>
    </location>
    <ligand>
        <name>ATP</name>
        <dbReference type="ChEBI" id="CHEBI:30616"/>
    </ligand>
</feature>
<feature type="modified residue" description="Phosphotyrosine; by ABL1" evidence="30">
    <location>
        <position position="231"/>
    </location>
</feature>
<feature type="modified residue" description="Phosphoserine" evidence="52">
    <location>
        <position position="305"/>
    </location>
</feature>
<feature type="modified residue" description="Phosphoserine" evidence="2">
    <location>
        <position position="343"/>
    </location>
</feature>
<feature type="modified residue" description="Phosphoserine" evidence="2">
    <location>
        <position position="365"/>
    </location>
</feature>
<feature type="modified residue" description="Phosphotyrosine; by ABL1 and SRC" evidence="9 11 30">
    <location>
        <position position="464"/>
    </location>
</feature>
<feature type="modified residue" description="Phosphotyrosine; by SRC" evidence="9 11">
    <location>
        <position position="471"/>
    </location>
</feature>
<feature type="modified residue" description="Phosphotyrosine; by ABL1" evidence="30">
    <location>
        <position position="556"/>
    </location>
</feature>
<feature type="modified residue" description="N6-acetyllysine" evidence="24">
    <location>
        <position position="608"/>
    </location>
</feature>
<feature type="modified residue" description="Phosphotyrosine; by ABL1" evidence="30">
    <location>
        <position position="611"/>
    </location>
</feature>
<feature type="modified residue" description="Phosphotyrosine; by ABL1" evidence="30">
    <location>
        <position position="792"/>
    </location>
</feature>
<feature type="modified residue" description="Phosphotyrosine; by ABL1" evidence="30">
    <location>
        <position position="846"/>
    </location>
</feature>
<feature type="modified residue" description="Phosphoserine" evidence="2">
    <location>
        <position position="947"/>
    </location>
</feature>
<feature type="modified residue" description="Phosphoserine" evidence="49 50 52">
    <location>
        <position position="1438"/>
    </location>
</feature>
<feature type="modified residue" description="Phosphotyrosine; by ABL1" evidence="30">
    <location>
        <position position="1449"/>
    </location>
</feature>
<feature type="modified residue" description="Phosphotyrosine; by ABL1" evidence="30">
    <location>
        <position position="1575"/>
    </location>
</feature>
<feature type="modified residue" description="Phosphotyrosine; by ABL1" evidence="30">
    <location>
        <position position="1635"/>
    </location>
</feature>
<feature type="modified residue" description="Phosphoserine" evidence="2">
    <location>
        <position position="1759"/>
    </location>
</feature>
<feature type="modified residue" description="Phosphoserine" evidence="2">
    <location>
        <position position="1760"/>
    </location>
</feature>
<feature type="modified residue" description="Phosphoserine" evidence="52">
    <location>
        <position position="1772"/>
    </location>
</feature>
<feature type="modified residue" description="Phosphoserine" evidence="2">
    <location>
        <position position="1773"/>
    </location>
</feature>
<feature type="modified residue" description="Phosphoserine" evidence="52">
    <location>
        <position position="1776"/>
    </location>
</feature>
<feature type="modified residue" description="Phosphothreonine" evidence="2">
    <location>
        <position position="1778"/>
    </location>
</feature>
<feature type="modified residue" description="Phosphoserine" evidence="52">
    <location>
        <position position="1779"/>
    </location>
</feature>
<feature type="disulfide bond" evidence="3">
    <location>
        <begin position="182"/>
        <end position="233"/>
    </location>
</feature>
<feature type="disulfide bond" evidence="3">
    <location>
        <begin position="435"/>
        <end position="487"/>
    </location>
</feature>
<feature type="disulfide bond" evidence="3">
    <location>
        <begin position="535"/>
        <end position="583"/>
    </location>
</feature>
<feature type="disulfide bond" evidence="3">
    <location>
        <begin position="742"/>
        <end position="805"/>
    </location>
</feature>
<feature type="disulfide bond" evidence="3">
    <location>
        <begin position="1119"/>
        <end position="1170"/>
    </location>
</feature>
<feature type="disulfide bond" evidence="3">
    <location>
        <begin position="1830"/>
        <end position="1882"/>
    </location>
</feature>
<feature type="splice variant" id="VSP_018846" description="In isoform 6 and isoform 8." evidence="39 40 41">
    <location>
        <begin position="1"/>
        <end position="1760"/>
    </location>
</feature>
<feature type="splice variant" id="VSP_053791" description="In isoform 7." evidence="40">
    <location>
        <begin position="1"/>
        <end position="1200"/>
    </location>
</feature>
<feature type="splice variant" id="VSP_018845" description="In isoform 5 and isoform 9." evidence="43 44">
    <location>
        <begin position="1"/>
        <end position="922"/>
    </location>
</feature>
<feature type="splice variant" id="VSP_004791" description="In isoform 2 and isoform 3B." evidence="38 42">
    <original>VSGIPKPEVAWFLEGTPVRRQEGSIEVYEDAGSHYLCLLKARTRDSGTYSCTASNAQGQLSCSWTLQVER</original>
    <variation>G</variation>
    <location>
        <begin position="437"/>
        <end position="506"/>
    </location>
</feature>
<feature type="splice variant" id="VSP_004793" description="In isoform 4." evidence="38">
    <location>
        <begin position="1473"/>
        <end position="1545"/>
    </location>
</feature>
<feature type="splice variant" id="VSP_004794" description="In isoform 3A and isoform 3B." evidence="38">
    <location>
        <begin position="1655"/>
        <end position="1705"/>
    </location>
</feature>
<feature type="splice variant" id="VSP_004795" description="In isoform Del-1790, isoform 8 and isoform 9." evidence="39 40 41 43">
    <location>
        <position position="1790"/>
    </location>
</feature>
<feature type="sequence variant" id="VAR_057106" description="In dbSNP:rs28497577.">
    <original>P</original>
    <variation>H</variation>
    <location>
        <position position="21"/>
    </location>
</feature>
<feature type="sequence variant" id="VAR_065570" description="In dbSNP:rs143896146." evidence="31">
    <original>A</original>
    <variation>V</variation>
    <location>
        <position position="128"/>
    </location>
</feature>
<feature type="sequence variant" id="VAR_065571" description="In dbSNP:rs140148380." evidence="31">
    <original>Q</original>
    <variation>H</variation>
    <location>
        <position position="133"/>
    </location>
</feature>
<feature type="sequence variant" id="VAR_065572" description="In dbSNP:rs111256888." evidence="31">
    <original>P</original>
    <variation>R</variation>
    <location>
        <position position="160"/>
    </location>
</feature>
<feature type="sequence variant" id="VAR_040847" description="In dbSNP:rs3796164." evidence="18">
    <original>V</original>
    <variation>A</variation>
    <location>
        <position position="261"/>
    </location>
</feature>
<feature type="sequence variant" id="VAR_040848" description="In dbSNP:rs55846245." evidence="18">
    <original>T</original>
    <variation>A</variation>
    <location>
        <position position="276"/>
    </location>
</feature>
<feature type="sequence variant" id="VAR_057107" description="In dbSNP:rs35912339.">
    <original>P</original>
    <variation>L</variation>
    <location>
        <position position="336"/>
    </location>
</feature>
<feature type="sequence variant" id="VAR_040849" description="In dbSNP:rs56378658." evidence="18">
    <original>R</original>
    <variation>H</variation>
    <location>
        <position position="378"/>
    </location>
</feature>
<feature type="sequence variant" id="VAR_040850" description="In dbSNP:rs35436690." evidence="18">
    <original>M</original>
    <variation>V</variation>
    <location>
        <position position="405"/>
    </location>
</feature>
<feature type="sequence variant" id="VAR_040851" description="In dbSNP:rs35156360." evidence="18">
    <original>P</original>
    <variation>S</variation>
    <location>
        <position position="443"/>
    </location>
</feature>
<feature type="sequence variant" id="VAR_040852" evidence="18">
    <original>R</original>
    <variation>G</variation>
    <location>
        <position position="607"/>
    </location>
</feature>
<feature type="sequence variant" id="VAR_040853" description="In dbSNP:rs750686734." evidence="18">
    <original>P</original>
    <variation>A</variation>
    <location>
        <position position="652"/>
    </location>
</feature>
<feature type="sequence variant" id="VAR_040854" description="In dbSNP:rs138172035." evidence="18 31">
    <original>W</original>
    <variation>C</variation>
    <location>
        <position position="656"/>
    </location>
</feature>
<feature type="sequence variant" id="VAR_040855" description="In dbSNP:rs776858093." evidence="18">
    <original>T</original>
    <variation>M</variation>
    <location>
        <position position="692"/>
    </location>
</feature>
<feature type="sequence variant" id="VAR_040856" description="In dbSNP:rs142835596." evidence="18">
    <original>A</original>
    <variation>T</variation>
    <location>
        <position position="701"/>
    </location>
</feature>
<feature type="sequence variant" id="VAR_040857" description="In dbSNP:rs112537316." evidence="18">
    <original>V</original>
    <variation>M</variation>
    <location>
        <position position="709"/>
    </location>
</feature>
<feature type="sequence variant" id="VAR_057108" description="In dbSNP:rs3732485.">
    <original>R</original>
    <variation>C</variation>
    <location>
        <position position="845"/>
    </location>
</feature>
<feature type="sequence variant" id="VAR_019986" description="In dbSNP:rs3732486.">
    <original>L</original>
    <variation>P</variation>
    <location>
        <position position="861"/>
    </location>
</feature>
<feature type="sequence variant" id="VAR_057109" description="In dbSNP:rs34542174.">
    <original>V</original>
    <variation>M</variation>
    <location>
        <position position="877"/>
    </location>
</feature>
<feature type="sequence variant" id="VAR_019987" description="In dbSNP:rs3732487.">
    <original>D</original>
    <variation>E</variation>
    <location>
        <position position="914"/>
    </location>
</feature>
<feature type="sequence variant" id="VAR_065573" description="In dbSNP:rs75370906." evidence="31">
    <original>T</original>
    <variation>A</variation>
    <location>
        <position position="1085"/>
    </location>
</feature>
<feature type="sequence variant" id="VAR_065574" description="In AAT7; uncertain significance; dbSNP:rs368390254." evidence="31">
    <original>V</original>
    <variation>M</variation>
    <location>
        <position position="1213"/>
    </location>
</feature>
<feature type="sequence variant" id="VAR_065575" description="In dbSNP:rs181663420." evidence="31">
    <original>E</original>
    <variation>K</variation>
    <location>
        <position position="1399"/>
    </location>
</feature>
<feature type="sequence variant" id="VAR_083423" description="In AAT7; uncertain significance." evidence="34">
    <location>
        <begin position="1458"/>
        <end position="1914"/>
    </location>
</feature>
<feature type="sequence variant" id="VAR_083424" description="In AAT7; uncertain significance." evidence="34">
    <location>
        <begin position="1487"/>
        <end position="1914"/>
    </location>
</feature>
<feature type="sequence variant" id="VAR_083425" description="In AAT7; decreases kinase activity; dbSNP:rs1576422965." evidence="36">
    <original>A</original>
    <variation>S</variation>
    <location>
        <position position="1491"/>
    </location>
</feature>
<feature type="sequence variant" id="VAR_040858" description="In dbSNP:rs34982967." evidence="18">
    <original>A</original>
    <variation>V</variation>
    <location>
        <position position="1527"/>
    </location>
</feature>
<feature type="sequence variant" id="VAR_040859" description="In an ovarian mucinous carcinoma sample; somatic mutation; dbSNP:rs1576401641." evidence="18">
    <original>P</original>
    <variation>L</variation>
    <location>
        <position position="1588"/>
    </location>
</feature>
<feature type="sequence variant" id="VAR_065576" description="In AAT7; 4-fold reduced affinity for calmodulin; decreased kinase activity compared to wild-type protein." evidence="31">
    <original>A</original>
    <variation>T</variation>
    <location>
        <position position="1754"/>
    </location>
</feature>
<feature type="sequence variant" id="VAR_065577" description="In AAT7; 7-fold reduced affinity for calmodulin; 6-fold decreased Vmax; dbSNP:rs387906781." evidence="31">
    <original>S</original>
    <variation>P</variation>
    <location>
        <position position="1759"/>
    </location>
</feature>
<feature type="mutagenesis site" description="Loss of acetylation and no kinase activity repression by NAA10/ARD1." evidence="24">
    <original>K</original>
    <variation>A</variation>
    <location>
        <position position="608"/>
    </location>
</feature>
<feature type="sequence conflict" description="In Ref. 2; AAC18423, 3; AAD15922/AAD15923, 6; AAR29062, 7; AAQ02673 and 11; EAW79438/EAW79440." evidence="45" ref="2 3 6 7 11">
    <original>P</original>
    <variation>S</variation>
    <location>
        <position position="147"/>
    </location>
</feature>
<feature type="sequence conflict" description="In Ref. 6; AAR29062." evidence="45" ref="6">
    <original>D</original>
    <variation>N</variation>
    <location>
        <position position="466"/>
    </location>
</feature>
<feature type="sequence conflict" description="In Ref. 2; AAC18423, 3; AAD15922, 6; AAR29062 and 7; AAQ02673." evidence="45" ref="2 3 6 7">
    <original>L</original>
    <variation>V</variation>
    <location>
        <position position="496"/>
    </location>
</feature>
<feature type="sequence conflict" description="In Ref. 2; AAC18423 and 3; AAD15921/AAD15922/AAD15923." evidence="45" ref="2 3">
    <original>C</original>
    <variation>W</variation>
    <location>
        <position position="681"/>
    </location>
</feature>
<feature type="sequence conflict" description="In Ref. 1; CAA59685." evidence="45" ref="1">
    <original>V</original>
    <variation>M</variation>
    <location>
        <position position="933"/>
    </location>
</feature>
<feature type="sequence conflict" description="In Ref. 3; AAD15922." evidence="45" ref="3">
    <original>S</original>
    <variation>P</variation>
    <location>
        <position position="963"/>
    </location>
</feature>
<feature type="sequence conflict" description="In Ref. 1; CAA59685." evidence="45" ref="1">
    <original>P</original>
    <variation>A</variation>
    <location>
        <position position="1022"/>
    </location>
</feature>
<feature type="sequence conflict" description="In Ref. 1; CAA59685 and 8; BAB21504." evidence="45" ref="1 8">
    <original>KPM</original>
    <variation>EAH</variation>
    <location>
        <begin position="1048"/>
        <end position="1050"/>
    </location>
</feature>
<feature type="sequence conflict" description="In Ref. 3; AAD15922/AAD15923." evidence="45" ref="3">
    <original>P</original>
    <variation>L</variation>
    <location>
        <position position="1162"/>
    </location>
</feature>
<feature type="sequence conflict" description="In Ref. 1; CAA59685." evidence="45" ref="1">
    <original>L</original>
    <variation>P</variation>
    <location>
        <position position="1210"/>
    </location>
</feature>
<feature type="sequence conflict" description="In Ref. 3; AAD15922/AAD15923." evidence="45" ref="3">
    <original>E</original>
    <variation>D</variation>
    <location>
        <position position="1280"/>
    </location>
</feature>
<feature type="sequence conflict" description="In Ref. 3; AAD15922/AAD15923/AAD15924." evidence="45" ref="3">
    <original>M</original>
    <variation>I</variation>
    <location>
        <position position="1284"/>
    </location>
</feature>
<feature type="sequence conflict" description="In Ref. 1; CAA59685." evidence="45" ref="1">
    <original>A</original>
    <variation>G</variation>
    <location>
        <position position="1300"/>
    </location>
</feature>
<feature type="sequence conflict" description="In Ref. 1; CAA59685." evidence="45" ref="1">
    <original>L</original>
    <variation>S</variation>
    <location>
        <position position="1316"/>
    </location>
</feature>
<feature type="sequence conflict" description="In Ref. 1; CAA59685." evidence="45" ref="1">
    <original>T</original>
    <variation>S</variation>
    <location>
        <position position="1326"/>
    </location>
</feature>
<feature type="sequence conflict" description="In Ref. 1; CAA59685." evidence="45" ref="1">
    <original>V</original>
    <variation>C</variation>
    <location>
        <position position="1478"/>
    </location>
</feature>
<feature type="sequence conflict" description="In Ref. 3; AAD15922/AAD15923." evidence="45" ref="3">
    <original>S</original>
    <variation>T</variation>
    <location>
        <position position="1511"/>
    </location>
</feature>
<feature type="sequence conflict" description="In Ref. 6; AAR29061/AAR29062." evidence="45" ref="6">
    <original>H</original>
    <variation>P</variation>
    <location>
        <position position="1518"/>
    </location>
</feature>
<feature type="sequence conflict" description="In Ref. 1; CAA59685." evidence="45" ref="1">
    <original>I</original>
    <variation>T</variation>
    <location>
        <position position="1563"/>
    </location>
</feature>
<feature type="sequence conflict" description="In Ref. 1; CAA59685." evidence="45" ref="1">
    <original>A</original>
    <variation>P</variation>
    <location>
        <position position="1609"/>
    </location>
</feature>
<feature type="sequence conflict" description="In Ref. 6; AAR29061/AAR29062." evidence="45" ref="6">
    <original>N</original>
    <variation>I</variation>
    <location>
        <position position="1634"/>
    </location>
</feature>
<feature type="sequence conflict" description="In Ref. 3; AAD15922/AAD15923/AAD15924." evidence="45" ref="3">
    <original>GY</original>
    <variation>D</variation>
    <location>
        <begin position="1639"/>
        <end position="1640"/>
    </location>
</feature>
<feature type="sequence conflict" description="In Ref. 1; CAA59685." evidence="45" ref="1">
    <original>G</original>
    <variation>R</variation>
    <location>
        <position position="1639"/>
    </location>
</feature>
<feature type="sequence conflict" description="In Ref. 1; CAA59685." evidence="45" ref="1">
    <original>G</original>
    <variation>R</variation>
    <location>
        <position position="1648"/>
    </location>
</feature>
<feature type="sequence conflict" description="In Ref. 1; CAA59685." evidence="45" ref="1">
    <original>LS</original>
    <variation>PF</variation>
    <location>
        <begin position="1658"/>
        <end position="1659"/>
    </location>
</feature>
<feature type="sequence conflict" description="In Ref. 6; AAR29061/AAR29062." evidence="45" ref="6">
    <original>A</original>
    <variation>P</variation>
    <location>
        <position position="1676"/>
    </location>
</feature>
<feature type="sequence conflict" description="In Ref. 1; CAA59685." evidence="45" ref="1">
    <original>CT</original>
    <variation>LA</variation>
    <location>
        <begin position="1710"/>
        <end position="1711"/>
    </location>
</feature>
<feature type="sequence conflict" description="In Ref. 3; AAD15922/AAD15923/AAD15924." evidence="45" ref="3">
    <original>L</original>
    <variation>H</variation>
    <location>
        <position position="1897"/>
    </location>
</feature>
<feature type="strand" evidence="56">
    <location>
        <begin position="415"/>
        <end position="418"/>
    </location>
</feature>
<feature type="strand" evidence="56">
    <location>
        <begin position="423"/>
        <end position="425"/>
    </location>
</feature>
<feature type="strand" evidence="56">
    <location>
        <begin position="431"/>
        <end position="438"/>
    </location>
</feature>
<feature type="strand" evidence="56">
    <location>
        <begin position="444"/>
        <end position="449"/>
    </location>
</feature>
<feature type="strand" evidence="56">
    <location>
        <begin position="458"/>
        <end position="466"/>
    </location>
</feature>
<feature type="strand" evidence="56">
    <location>
        <begin position="469"/>
        <end position="476"/>
    </location>
</feature>
<feature type="helix" evidence="56">
    <location>
        <begin position="479"/>
        <end position="481"/>
    </location>
</feature>
<feature type="strand" evidence="56">
    <location>
        <begin position="483"/>
        <end position="491"/>
    </location>
</feature>
<feature type="strand" evidence="56">
    <location>
        <begin position="494"/>
        <end position="504"/>
    </location>
</feature>
<feature type="strand" evidence="54">
    <location>
        <begin position="512"/>
        <end position="518"/>
    </location>
</feature>
<feature type="strand" evidence="54">
    <location>
        <begin position="523"/>
        <end position="526"/>
    </location>
</feature>
<feature type="strand" evidence="54">
    <location>
        <begin position="531"/>
        <end position="534"/>
    </location>
</feature>
<feature type="strand" evidence="54">
    <location>
        <begin position="536"/>
        <end position="541"/>
    </location>
</feature>
<feature type="strand" evidence="54">
    <location>
        <begin position="546"/>
        <end position="553"/>
    </location>
</feature>
<feature type="strand" evidence="54">
    <location>
        <begin position="560"/>
        <end position="562"/>
    </location>
</feature>
<feature type="strand" evidence="54">
    <location>
        <begin position="565"/>
        <end position="570"/>
    </location>
</feature>
<feature type="strand" evidence="54">
    <location>
        <begin position="581"/>
        <end position="586"/>
    </location>
</feature>
<feature type="strand" evidence="54">
    <location>
        <begin position="591"/>
        <end position="595"/>
    </location>
</feature>
<feature type="strand" evidence="54">
    <location>
        <begin position="598"/>
        <end position="601"/>
    </location>
</feature>
<feature type="strand" evidence="53">
    <location>
        <begin position="1239"/>
        <end position="1241"/>
    </location>
</feature>
<feature type="strand" evidence="53">
    <location>
        <begin position="1246"/>
        <end position="1250"/>
    </location>
</feature>
<feature type="strand" evidence="53">
    <location>
        <begin position="1255"/>
        <end position="1266"/>
    </location>
</feature>
<feature type="strand" evidence="53">
    <location>
        <begin position="1268"/>
        <end position="1277"/>
    </location>
</feature>
<feature type="strand" evidence="53">
    <location>
        <begin position="1281"/>
        <end position="1288"/>
    </location>
</feature>
<feature type="strand" evidence="53">
    <location>
        <begin position="1290"/>
        <end position="1297"/>
    </location>
</feature>
<feature type="turn" evidence="53">
    <location>
        <begin position="1302"/>
        <end position="1304"/>
    </location>
</feature>
<feature type="strand" evidence="53">
    <location>
        <begin position="1306"/>
        <end position="1313"/>
    </location>
</feature>
<feature type="strand" evidence="53">
    <location>
        <begin position="1318"/>
        <end position="1320"/>
    </location>
</feature>
<feature type="strand" evidence="53">
    <location>
        <begin position="1323"/>
        <end position="1328"/>
    </location>
</feature>
<feature type="helix" evidence="55">
    <location>
        <begin position="1743"/>
        <end position="1760"/>
    </location>
</feature>
<feature type="initiator methionine" description="Removed" evidence="51">
    <location sequence="Q15746-8">
        <position position="1"/>
    </location>
</feature>
<feature type="modified residue" description="N-acetylalanine" evidence="51">
    <location sequence="Q15746-8">
        <position position="2"/>
    </location>
</feature>
<feature type="initiator methionine" description="Removed" evidence="51">
    <location sequence="Q15746-10">
        <position position="1"/>
    </location>
</feature>
<feature type="modified residue" description="N-acetylalanine" evidence="51">
    <location sequence="Q15746-10">
        <position position="2"/>
    </location>
</feature>
<gene>
    <name evidence="48" type="primary">MYLK</name>
    <name type="synonym">MLCK</name>
    <name type="synonym">MLCK1</name>
    <name type="synonym">MYLK1</name>
</gene>
<accession>Q15746</accession>
<accession>B4DUE3</accession>
<accession>D3DN97</accession>
<accession>O95796</accession>
<accession>O95797</accession>
<accession>O95798</accession>
<accession>O95799</accession>
<accession>Q14844</accession>
<accession>Q16794</accession>
<accession>Q17S15</accession>
<accession>Q3ZCP9</accession>
<accession>Q5MY99</accession>
<accession>Q5MYA0</accession>
<accession>Q6P2N0</accession>
<accession>Q7Z4J0</accession>
<accession>Q9C0L5</accession>
<accession>Q9UBG5</accession>
<accession>Q9UBY6</accession>
<accession>Q9UIT9</accession>
<evidence type="ECO:0000250" key="1"/>
<evidence type="ECO:0000250" key="2">
    <source>
        <dbReference type="UniProtKB" id="Q6PDN3"/>
    </source>
</evidence>
<evidence type="ECO:0000255" key="3">
    <source>
        <dbReference type="PROSITE-ProRule" id="PRU00114"/>
    </source>
</evidence>
<evidence type="ECO:0000255" key="4">
    <source>
        <dbReference type="PROSITE-ProRule" id="PRU00159"/>
    </source>
</evidence>
<evidence type="ECO:0000255" key="5">
    <source>
        <dbReference type="PROSITE-ProRule" id="PRU00316"/>
    </source>
</evidence>
<evidence type="ECO:0000255" key="6">
    <source>
        <dbReference type="PROSITE-ProRule" id="PRU10027"/>
    </source>
</evidence>
<evidence type="ECO:0000256" key="7">
    <source>
        <dbReference type="SAM" id="MobiDB-lite"/>
    </source>
</evidence>
<evidence type="ECO:0000269" key="8">
    <source>
    </source>
</evidence>
<evidence type="ECO:0000269" key="9">
    <source>
    </source>
</evidence>
<evidence type="ECO:0000269" key="10">
    <source>
    </source>
</evidence>
<evidence type="ECO:0000269" key="11">
    <source>
    </source>
</evidence>
<evidence type="ECO:0000269" key="12">
    <source>
    </source>
</evidence>
<evidence type="ECO:0000269" key="13">
    <source>
    </source>
</evidence>
<evidence type="ECO:0000269" key="14">
    <source>
    </source>
</evidence>
<evidence type="ECO:0000269" key="15">
    <source>
    </source>
</evidence>
<evidence type="ECO:0000269" key="16">
    <source>
    </source>
</evidence>
<evidence type="ECO:0000269" key="17">
    <source>
    </source>
</evidence>
<evidence type="ECO:0000269" key="18">
    <source>
    </source>
</evidence>
<evidence type="ECO:0000269" key="19">
    <source>
    </source>
</evidence>
<evidence type="ECO:0000269" key="20">
    <source>
    </source>
</evidence>
<evidence type="ECO:0000269" key="21">
    <source>
    </source>
</evidence>
<evidence type="ECO:0000269" key="22">
    <source>
    </source>
</evidence>
<evidence type="ECO:0000269" key="23">
    <source>
    </source>
</evidence>
<evidence type="ECO:0000269" key="24">
    <source>
    </source>
</evidence>
<evidence type="ECO:0000269" key="25">
    <source>
    </source>
</evidence>
<evidence type="ECO:0000269" key="26">
    <source>
    </source>
</evidence>
<evidence type="ECO:0000269" key="27">
    <source>
    </source>
</evidence>
<evidence type="ECO:0000269" key="28">
    <source>
    </source>
</evidence>
<evidence type="ECO:0000269" key="29">
    <source>
    </source>
</evidence>
<evidence type="ECO:0000269" key="30">
    <source>
    </source>
</evidence>
<evidence type="ECO:0000269" key="31">
    <source>
    </source>
</evidence>
<evidence type="ECO:0000269" key="32">
    <source>
    </source>
</evidence>
<evidence type="ECO:0000269" key="33">
    <source>
    </source>
</evidence>
<evidence type="ECO:0000269" key="34">
    <source>
    </source>
</evidence>
<evidence type="ECO:0000269" key="35">
    <source>
    </source>
</evidence>
<evidence type="ECO:0000269" key="36">
    <source>
    </source>
</evidence>
<evidence type="ECO:0000269" key="37">
    <source>
    </source>
</evidence>
<evidence type="ECO:0000303" key="38">
    <source>
    </source>
</evidence>
<evidence type="ECO:0000303" key="39">
    <source>
    </source>
</evidence>
<evidence type="ECO:0000303" key="40">
    <source>
    </source>
</evidence>
<evidence type="ECO:0000303" key="41">
    <source>
    </source>
</evidence>
<evidence type="ECO:0000303" key="42">
    <source>
    </source>
</evidence>
<evidence type="ECO:0000303" key="43">
    <source>
    </source>
</evidence>
<evidence type="ECO:0000303" key="44">
    <source ref="8"/>
</evidence>
<evidence type="ECO:0000305" key="45"/>
<evidence type="ECO:0000305" key="46">
    <source>
    </source>
</evidence>
<evidence type="ECO:0000305" key="47">
    <source>
    </source>
</evidence>
<evidence type="ECO:0000312" key="48">
    <source>
        <dbReference type="HGNC" id="HGNC:7590"/>
    </source>
</evidence>
<evidence type="ECO:0007744" key="49">
    <source>
    </source>
</evidence>
<evidence type="ECO:0007744" key="50">
    <source>
    </source>
</evidence>
<evidence type="ECO:0007744" key="51">
    <source>
    </source>
</evidence>
<evidence type="ECO:0007744" key="52">
    <source>
    </source>
</evidence>
<evidence type="ECO:0007829" key="53">
    <source>
        <dbReference type="PDB" id="2CQV"/>
    </source>
</evidence>
<evidence type="ECO:0007829" key="54">
    <source>
        <dbReference type="PDB" id="2YR3"/>
    </source>
</evidence>
<evidence type="ECO:0007829" key="55">
    <source>
        <dbReference type="PDB" id="5JQA"/>
    </source>
</evidence>
<evidence type="ECO:0007829" key="56">
    <source>
        <dbReference type="PDB" id="6C6M"/>
    </source>
</evidence>
<name>MYLK_HUMAN</name>
<organism>
    <name type="scientific">Homo sapiens</name>
    <name type="common">Human</name>
    <dbReference type="NCBI Taxonomy" id="9606"/>
    <lineage>
        <taxon>Eukaryota</taxon>
        <taxon>Metazoa</taxon>
        <taxon>Chordata</taxon>
        <taxon>Craniata</taxon>
        <taxon>Vertebrata</taxon>
        <taxon>Euteleostomi</taxon>
        <taxon>Mammalia</taxon>
        <taxon>Eutheria</taxon>
        <taxon>Euarchontoglires</taxon>
        <taxon>Primates</taxon>
        <taxon>Haplorrhini</taxon>
        <taxon>Catarrhini</taxon>
        <taxon>Hominidae</taxon>
        <taxon>Homo</taxon>
    </lineage>
</organism>
<comment type="function">
    <text evidence="9 10 13 14 15 16 20 21 24 26 27 28 29">Calcium/calmodulin-dependent myosin light chain kinase implicated in smooth muscle contraction via phosphorylation of myosin light chains (MLC). Also regulates actin-myosin interaction through a non-kinase activity. Phosphorylates PTK2B/PYK2 and myosin light-chains. Involved in the inflammatory response (e.g. apoptosis, vascular permeability, leukocyte diapedesis), cell motility and morphology, airway hyperreactivity and other activities relevant to asthma. Required for tonic airway smooth muscle contraction that is necessary for physiological and asthmatic airway resistance. Necessary for gastrointestinal motility. Implicated in the regulation of endothelial as well as vascular permeability, probably via the regulation of cytoskeletal rearrangements. In the nervous system it has been shown to control the growth initiation of astrocytic processes in culture and to participate in transmitter release at synapses formed between cultured sympathetic ganglion cells. Critical participant in signaling sequences that result in fibroblast apoptosis. Plays a role in the regulation of epithelial cell survival. Required for epithelial wound healing, especially during actomyosin ring contraction during purse-string wound closure. Mediates RhoA-dependent membrane blebbing. Triggers TRPC5 channel activity in a calcium-dependent signaling, by inducing its subcellular localization at the plasma membrane. Promotes cell migration (including tumor cells) and tumor metastasis. PTK2B/PYK2 activation by phosphorylation mediates ITGB2 activation and is thus essential to trigger neutrophil transmigration during acute lung injury (ALI). May regulate optic nerve head astrocyte migration. Probably involved in mitotic cytoskeletal regulation. Regulates tight junction probably by modulating ZO-1 exchange in the perijunctional actomyosin ring. Mediates burn-induced microvascular barrier injury; triggers endothelial contraction in the development of microvascular hyperpermeability by phosphorylating MLC. Essential for intestinal barrier dysfunction. Mediates Giardia spp.-mediated reduced epithelial barrier function during giardiasis intestinal infection via reorganization of cytoskeletal F-actin and tight junctional ZO-1. Necessary for hypotonicity-induced Ca(2+) entry and subsequent activation of volume-sensitive organic osmolyte/anion channels (VSOAC) in cervical cancer cells. Responsible for high proliferative ability of breast cancer cells through anti-apoptosis.</text>
</comment>
<comment type="catalytic activity">
    <reaction evidence="9">
        <text>L-seryl-[myosin light chain] + ATP = O-phospho-L-seryl-[myosin light chain] + ADP + H(+)</text>
        <dbReference type="Rhea" id="RHEA:22004"/>
        <dbReference type="Rhea" id="RHEA-COMP:13684"/>
        <dbReference type="Rhea" id="RHEA-COMP:13685"/>
        <dbReference type="ChEBI" id="CHEBI:15378"/>
        <dbReference type="ChEBI" id="CHEBI:29999"/>
        <dbReference type="ChEBI" id="CHEBI:30616"/>
        <dbReference type="ChEBI" id="CHEBI:83421"/>
        <dbReference type="ChEBI" id="CHEBI:456216"/>
        <dbReference type="EC" id="2.7.11.18"/>
    </reaction>
    <physiologicalReaction direction="left-to-right" evidence="46">
        <dbReference type="Rhea" id="RHEA:22005"/>
    </physiologicalReaction>
</comment>
<comment type="catalytic activity">
    <reaction evidence="9">
        <text>L-threonyl-[myosin light chain] + ATP = O-phospho-L-threonyl-[myosin light chain] + ADP + H(+)</text>
        <dbReference type="Rhea" id="RHEA:53900"/>
        <dbReference type="Rhea" id="RHEA-COMP:13686"/>
        <dbReference type="Rhea" id="RHEA-COMP:13687"/>
        <dbReference type="ChEBI" id="CHEBI:15378"/>
        <dbReference type="ChEBI" id="CHEBI:30013"/>
        <dbReference type="ChEBI" id="CHEBI:30616"/>
        <dbReference type="ChEBI" id="CHEBI:61977"/>
        <dbReference type="ChEBI" id="CHEBI:456216"/>
        <dbReference type="EC" id="2.7.11.18"/>
    </reaction>
    <physiologicalReaction direction="left-to-right" evidence="46">
        <dbReference type="Rhea" id="RHEA:53901"/>
    </physiologicalReaction>
</comment>
<comment type="cofactor">
    <cofactor>
        <name>Mg(2+)</name>
        <dbReference type="ChEBI" id="CHEBI:18420"/>
    </cofactor>
</comment>
<comment type="cofactor">
    <cofactor>
        <name>Ca(2+)</name>
        <dbReference type="ChEBI" id="CHEBI:29108"/>
    </cofactor>
</comment>
<comment type="activity regulation">
    <text evidence="9 10 12 15 16 32">Isoform 1 is activated by phosphorylation on Tyr-464 and Tyr-471. Isoforms which lack these tyrosine residues are not regulated in this way. All catalytically active isoforms require binding to calcium and calmodulin for activation. Repressed by organometallic pyridylnaphthalimide complexes, wortmannin, ML-7 (a synthetic naphthalenesulphonyl derivative that inhibits the binding of ATP to MLCK) and ML-9.</text>
</comment>
<comment type="biophysicochemical properties">
    <kinetics>
        <KM evidence="9">6.5 uM for MLC (isoform 1 at 22 degrees Celsius)</KM>
        <KM evidence="9">7.2 uM for MLC (isoform 2 at 22 degrees Celsius)</KM>
        <KM evidence="36">9.3 uM for MLC</KM>
        <Vmax evidence="9">11.9 umol/min/mg enzyme (isoform 1 at 22 degrees Celsius)</Vmax>
        <Vmax evidence="9">10.9 umol/min/mg enzyme (isoform 1 at 22 degrees Celsius)</Vmax>
    </kinetics>
</comment>
<comment type="subunit">
    <text evidence="1 11 19 20 24 25 30">All isoforms including Telokin bind calmodulin. Interacts with SVIL (By similarity). Interacts with CTTN; this interaction is reduced during thrombin-induced endothelial cell (EC) contraction but is promoted by the barrier-protective agonist sphingosine 1-phosphate (S1P) within lamellipodia. A complex made of ABL1, CTTN and MYLK regulates cortical actin-based cytoskeletal rearrangement critical to sphingosine 1-phosphate (S1P)-mediated endothelial cell (EC) barrier enhancement. Binds to NAA10/ARD1 and PTK2B/PYK2.</text>
</comment>
<comment type="interaction">
    <interactant intactId="EBI-968482">
        <id>Q15746</id>
    </interactant>
    <interactant intactId="EBI-349832">
        <id>Q9HD26</id>
        <label>GOPC</label>
    </interactant>
    <organismsDiffer>false</organismsDiffer>
    <experiments>3</experiments>
</comment>
<comment type="interaction">
    <interactant intactId="EBI-968482">
        <id>Q15746</id>
    </interactant>
    <interactant intactId="EBI-389883">
        <id>P16333</id>
        <label>NCK1</label>
    </interactant>
    <organismsDiffer>false</organismsDiffer>
    <experiments>2</experiments>
</comment>
<comment type="interaction">
    <interactant intactId="EBI-55022150">
        <id>Q15746-1</id>
    </interactant>
    <interactant intactId="EBI-10968017">
        <id>Q14318-2</id>
        <label>FKBP8</label>
    </interactant>
    <organismsDiffer>false</organismsDiffer>
    <experiments>5</experiments>
</comment>
<comment type="interaction">
    <interactant intactId="EBI-12189939">
        <id>Q15746-7</id>
    </interactant>
    <interactant intactId="EBI-743771">
        <id>Q92624</id>
        <label>APPBP2</label>
    </interactant>
    <organismsDiffer>false</organismsDiffer>
    <experiments>3</experiments>
</comment>
<comment type="interaction">
    <interactant intactId="EBI-12189939">
        <id>Q15746-7</id>
    </interactant>
    <interactant intactId="EBI-11102276">
        <id>Q9HD26-2</id>
        <label>GOPC</label>
    </interactant>
    <organismsDiffer>false</organismsDiffer>
    <experiments>5</experiments>
</comment>
<comment type="subcellular location">
    <subcellularLocation>
        <location evidence="25">Cytoplasm</location>
    </subcellularLocation>
    <subcellularLocation>
        <location evidence="25">Cell projection</location>
        <location evidence="25">Lamellipodium</location>
    </subcellularLocation>
    <subcellularLocation>
        <location evidence="13">Cleavage furrow</location>
    </subcellularLocation>
    <subcellularLocation>
        <location evidence="13">Cytoplasm</location>
        <location evidence="13">Cytoskeleton</location>
        <location evidence="13">Stress fiber</location>
    </subcellularLocation>
    <text evidence="13">Localized to stress fibers during interphase and to the cleavage furrow during mitosis.</text>
</comment>
<comment type="alternative products">
    <event type="alternative promoter"/>
    <event type="alternative splicing"/>
    <isoform>
        <id>Q15746-1</id>
        <name>1</name>
        <name>Non-muscle isozyme</name>
        <sequence type="displayed"/>
    </isoform>
    <isoform>
        <id>Q15746-2</id>
        <name>2</name>
        <sequence type="described" ref="VSP_004791"/>
    </isoform>
    <isoform>
        <id>Q15746-3</id>
        <name>3A</name>
        <sequence type="described" ref="VSP_004794"/>
    </isoform>
    <isoform>
        <id>Q15746-4</id>
        <name>3B</name>
        <sequence type="described" ref="VSP_004791 VSP_004794"/>
    </isoform>
    <isoform>
        <id>Q15746-5</id>
        <name>4</name>
        <sequence type="described" ref="VSP_004793"/>
    </isoform>
    <isoform>
        <id>Q15746-6</id>
        <name>Del-1790</name>
        <sequence type="described" ref="VSP_004795"/>
    </isoform>
    <isoform>
        <id>Q15746-7</id>
        <name>5</name>
        <name>Smooth-muscle isozyme</name>
        <sequence type="described" ref="VSP_018845"/>
    </isoform>
    <isoform>
        <id>Q15746-8</id>
        <name>6</name>
        <name>Telokin</name>
        <sequence type="described" ref="VSP_018846"/>
    </isoform>
    <isoform>
        <id>Q15746-9</id>
        <name>7</name>
        <sequence type="described" ref="VSP_053791"/>
    </isoform>
    <isoform>
        <id>Q15746-10</id>
        <name>8</name>
        <sequence type="described" ref="VSP_018846 VSP_004795"/>
    </isoform>
    <isoform>
        <id>Q15746-11</id>
        <name>9</name>
        <sequence type="described" ref="VSP_018845 VSP_004795"/>
    </isoform>
</comment>
<comment type="tissue specificity">
    <text evidence="8 17 25 37">Smooth muscle and non-muscle isozymes are expressed in a wide variety of adult and fetal tissues and in cultured endothelium with qualitative expression appearing to be neither tissue- nor development-specific. Non-muscle isoform 2 is the dominant splice variant expressed in various tissues. Telokin has been found in a wide variety of adult and fetal tissues. Accumulates in well differentiated enterocytes of the intestinal epithelium in response to tumor necrosis factor (TNF).</text>
</comment>
<comment type="induction">
    <text evidence="17 22 23">Accumulates in individuals with asthma (at protein levels). Induced by tumor necrosis factor (TNF). Repressed by androgens (e.g. R1881).</text>
</comment>
<comment type="PTM">
    <text evidence="9 11 30">Can probably be down-regulated by phosphorylation. Tyrosine phosphorylation by ABL1 increases kinase activity, reverses MLCK-mediated inhibition of Arp2/3-mediated actin polymerization, and enhances CTTN-binding. Phosphorylation by SRC at Tyr-464 and Tyr-471 promotes CTTN binding.</text>
</comment>
<comment type="PTM">
    <text evidence="1">The C-terminus is deglutamylated by AGTPBP1/CCP1, AGBL1/CCP4 and AGBL4/CCP6, leading to the formation of Myosin light chain kinase, smooth muscle, deglutamylated form. The consequences of C-terminal deglutamylation are unknown (By similarity).</text>
</comment>
<comment type="PTM">
    <text evidence="24">Acetylated at Lys-608 by NAA10/ARD1 via a calcium-dependent signaling; this acetylation represses kinase activity and reduces tumor cell migration.</text>
</comment>
<comment type="disease" evidence="31 34 36">
    <disease id="DI-03062">
        <name>Aortic aneurysm, familial thoracic 7</name>
        <acronym>AAT7</acronym>
        <description>A disease characterized by permanent dilation of the thoracic aorta usually due to degenerative changes in the aortic wall. It is primarily associated with a characteristic histologic appearance known as 'medial necrosis' or 'Erdheim cystic medial necrosis' in which there is degeneration and fragmentation of elastic fibers, loss of smooth muscle cells, and an accumulation of basophilic ground substance.</description>
        <dbReference type="MIM" id="613780"/>
    </disease>
    <text>The disease is caused by variants affecting the gene represented in this entry.</text>
</comment>
<comment type="disease" evidence="35">
    <disease id="DI-05709">
        <name>Megacystis-microcolon-intestinal hypoperistalsis syndrome</name>
        <acronym>MMIHS</acronym>
        <description>A form of megacystis-microcolon-intestinal hypoperistalsis syndrome, a congenital visceral myopathy primarily affecting females, and characterized by loss of smooth muscle contraction in the bladder and intestine. Affected individuals present at birth with functional obstruction of intestine, microcolon, dilation of bladder, and secondary hydronephrosis. The majority of cases have a fatal outcome due to malnutrition and sepsis, followed by multiorgan failure. MMIHS inheritance is autosomal recessive.</description>
        <dbReference type="MIM" id="249210"/>
    </disease>
    <text>The disease is caused by variants affecting the gene represented in this entry.</text>
</comment>
<comment type="miscellaneous">
    <text evidence="47">In asthmatic patients, overexpression promotes actin filament propulsion, thus contributing to airway hyperresponsiveness. Some MYLK variants may contribute to acute lung injury (ALI) susceptibility. Potential therapeutic target in the treatment of burn edema.</text>
</comment>
<comment type="miscellaneous">
    <molecule>Isoform 5</molecule>
    <text evidence="33">Transcribed from an alternative promoter resulting in the usage of Met-923 as initiator codon.</text>
</comment>
<comment type="miscellaneous">
    <molecule>Isoform 6</molecule>
    <text evidence="45">Transcribed from an alternative promoter resulting in the usage of Met-1761 as initiator codon. Has no catalytic activity. Initiator Met is removed.</text>
</comment>
<comment type="miscellaneous">
    <molecule>Isoform 8</molecule>
    <text evidence="45">Transcribed from an alternative promoter resulting in the usage of Met-1761 as initiator codon. Initiator Met is removed.</text>
</comment>
<comment type="miscellaneous">
    <molecule>Isoform 9</molecule>
    <text evidence="33">Transcribed from an alternative promoter resulting in the usage of Met-923 as initiator codon.</text>
</comment>
<comment type="similarity">
    <text evidence="45">Belongs to the protein kinase superfamily. CAMK Ser/Thr protein kinase family.</text>
</comment>
<comment type="sequence caution" evidence="45">
    <conflict type="frameshift">
        <sequence resource="EMBL-CDS" id="AAD15922"/>
    </conflict>
</comment>
<comment type="sequence caution" evidence="45">
    <conflict type="frameshift">
        <sequence resource="EMBL-CDS" id="AAD15923"/>
    </conflict>
</comment>
<comment type="sequence caution" evidence="45">
    <conflict type="frameshift">
        <sequence resource="EMBL-CDS" id="AAD15924"/>
    </conflict>
</comment>
<comment type="online information" name="Wikipedia">
    <link uri="https://en.wikipedia.org/wiki/Myosin_light-chain_kinase"/>
    <text>Myosin light-chain kinase entry</text>
</comment>
<comment type="online information" name="Atlas of Genetics and Cytogenetics in Oncology and Haematology">
    <link uri="https://atlasgeneticsoncology.org/gene/43364/MYLK"/>
</comment>
<dbReference type="EC" id="2.7.11.18" evidence="9"/>
<dbReference type="EMBL" id="X85337">
    <property type="protein sequence ID" value="CAA59685.1"/>
    <property type="molecule type" value="mRNA"/>
</dbReference>
<dbReference type="EMBL" id="U48959">
    <property type="protein sequence ID" value="AAC18423.2"/>
    <property type="molecule type" value="mRNA"/>
</dbReference>
<dbReference type="EMBL" id="AF069601">
    <property type="protein sequence ID" value="AAD15921.2"/>
    <property type="molecule type" value="mRNA"/>
</dbReference>
<dbReference type="EMBL" id="AF069602">
    <property type="protein sequence ID" value="AAD15922.1"/>
    <property type="status" value="ALT_FRAME"/>
    <property type="molecule type" value="mRNA"/>
</dbReference>
<dbReference type="EMBL" id="AF069603">
    <property type="protein sequence ID" value="AAD15923.1"/>
    <property type="status" value="ALT_FRAME"/>
    <property type="molecule type" value="mRNA"/>
</dbReference>
<dbReference type="EMBL" id="AF069604">
    <property type="protein sequence ID" value="AAD15924.1"/>
    <property type="status" value="ALT_FRAME"/>
    <property type="molecule type" value="mRNA"/>
</dbReference>
<dbReference type="EMBL" id="AF096771">
    <property type="protein sequence ID" value="AAD51380.1"/>
    <property type="molecule type" value="Genomic_DNA"/>
</dbReference>
<dbReference type="EMBL" id="AF096766">
    <property type="protein sequence ID" value="AAD51380.1"/>
    <property type="status" value="JOINED"/>
    <property type="molecule type" value="Genomic_DNA"/>
</dbReference>
<dbReference type="EMBL" id="AF096767">
    <property type="protein sequence ID" value="AAD51380.1"/>
    <property type="status" value="JOINED"/>
    <property type="molecule type" value="Genomic_DNA"/>
</dbReference>
<dbReference type="EMBL" id="AF096768">
    <property type="protein sequence ID" value="AAD51380.1"/>
    <property type="status" value="JOINED"/>
    <property type="molecule type" value="Genomic_DNA"/>
</dbReference>
<dbReference type="EMBL" id="AF096769">
    <property type="protein sequence ID" value="AAD51380.1"/>
    <property type="status" value="JOINED"/>
    <property type="molecule type" value="Genomic_DNA"/>
</dbReference>
<dbReference type="EMBL" id="AF096770">
    <property type="protein sequence ID" value="AAD51380.1"/>
    <property type="status" value="JOINED"/>
    <property type="molecule type" value="Genomic_DNA"/>
</dbReference>
<dbReference type="EMBL" id="AF096771">
    <property type="protein sequence ID" value="AAD51381.1"/>
    <property type="molecule type" value="Genomic_DNA"/>
</dbReference>
<dbReference type="EMBL" id="AF096769">
    <property type="protein sequence ID" value="AAD51381.1"/>
    <property type="status" value="JOINED"/>
    <property type="molecule type" value="Genomic_DNA"/>
</dbReference>
<dbReference type="EMBL" id="AF096770">
    <property type="protein sequence ID" value="AAD51381.1"/>
    <property type="status" value="JOINED"/>
    <property type="molecule type" value="Genomic_DNA"/>
</dbReference>
<dbReference type="EMBL" id="AF096773">
    <property type="protein sequence ID" value="AAD54017.1"/>
    <property type="molecule type" value="mRNA"/>
</dbReference>
<dbReference type="EMBL" id="AF096774">
    <property type="protein sequence ID" value="AAD54018.1"/>
    <property type="molecule type" value="mRNA"/>
</dbReference>
<dbReference type="EMBL" id="AF096775">
    <property type="protein sequence ID" value="AAD54019.1"/>
    <property type="molecule type" value="mRNA"/>
</dbReference>
<dbReference type="EMBL" id="AY424269">
    <property type="protein sequence ID" value="AAR29061.1"/>
    <property type="molecule type" value="mRNA"/>
</dbReference>
<dbReference type="EMBL" id="AY424270">
    <property type="protein sequence ID" value="AAR29062.1"/>
    <property type="molecule type" value="mRNA"/>
</dbReference>
<dbReference type="EMBL" id="AY339601">
    <property type="protein sequence ID" value="AAQ02673.1"/>
    <property type="molecule type" value="mRNA"/>
</dbReference>
<dbReference type="EMBL" id="AB037663">
    <property type="protein sequence ID" value="BAB21504.1"/>
    <property type="molecule type" value="mRNA"/>
</dbReference>
<dbReference type="EMBL" id="AK300610">
    <property type="protein sequence ID" value="BAG62305.1"/>
    <property type="molecule type" value="mRNA"/>
</dbReference>
<dbReference type="EMBL" id="AK314412">
    <property type="protein sequence ID" value="BAG37033.1"/>
    <property type="molecule type" value="mRNA"/>
</dbReference>
<dbReference type="EMBL" id="AK314443">
    <property type="protein sequence ID" value="BAG37052.1"/>
    <property type="molecule type" value="mRNA"/>
</dbReference>
<dbReference type="EMBL" id="AC020634">
    <property type="status" value="NOT_ANNOTATED_CDS"/>
    <property type="molecule type" value="Genomic_DNA"/>
</dbReference>
<dbReference type="EMBL" id="AC023165">
    <property type="status" value="NOT_ANNOTATED_CDS"/>
    <property type="molecule type" value="Genomic_DNA"/>
</dbReference>
<dbReference type="EMBL" id="CH471052">
    <property type="protein sequence ID" value="EAW79438.1"/>
    <property type="molecule type" value="Genomic_DNA"/>
</dbReference>
<dbReference type="EMBL" id="CH471052">
    <property type="protein sequence ID" value="EAW79439.1"/>
    <property type="molecule type" value="Genomic_DNA"/>
</dbReference>
<dbReference type="EMBL" id="CH471052">
    <property type="protein sequence ID" value="EAW79440.1"/>
    <property type="molecule type" value="Genomic_DNA"/>
</dbReference>
<dbReference type="EMBL" id="CH471052">
    <property type="protein sequence ID" value="EAW79441.1"/>
    <property type="molecule type" value="Genomic_DNA"/>
</dbReference>
<dbReference type="EMBL" id="BC100761">
    <property type="protein sequence ID" value="AAI00762.2"/>
    <property type="molecule type" value="mRNA"/>
</dbReference>
<dbReference type="EMBL" id="BC100762">
    <property type="protein sequence ID" value="AAI00763.2"/>
    <property type="molecule type" value="mRNA"/>
</dbReference>
<dbReference type="EMBL" id="BC100763">
    <property type="protein sequence ID" value="AAI00764.2"/>
    <property type="molecule type" value="mRNA"/>
</dbReference>
<dbReference type="EMBL" id="BC064420">
    <property type="protein sequence ID" value="AAH64420.2"/>
    <property type="molecule type" value="mRNA"/>
</dbReference>
<dbReference type="EMBL" id="X90870">
    <property type="protein sequence ID" value="CAA62378.1"/>
    <property type="molecule type" value="mRNA"/>
</dbReference>
<dbReference type="CCDS" id="CCDS3023.1">
    <molecule id="Q15746-3"/>
</dbReference>
<dbReference type="CCDS" id="CCDS43141.1">
    <molecule id="Q15746-2"/>
</dbReference>
<dbReference type="CCDS" id="CCDS46896.1">
    <molecule id="Q15746-1"/>
</dbReference>
<dbReference type="CCDS" id="CCDS46897.1">
    <molecule id="Q15746-8"/>
</dbReference>
<dbReference type="CCDS" id="CCDS58849.1">
    <molecule id="Q15746-10"/>
</dbReference>
<dbReference type="CCDS" id="CCDS93356.1">
    <molecule id="Q15746-4"/>
</dbReference>
<dbReference type="RefSeq" id="NP_001308238.1">
    <property type="nucleotide sequence ID" value="NM_001321309.1"/>
</dbReference>
<dbReference type="RefSeq" id="NP_444253.3">
    <molecule id="Q15746-1"/>
    <property type="nucleotide sequence ID" value="NM_053025.3"/>
</dbReference>
<dbReference type="RefSeq" id="NP_444254.3">
    <molecule id="Q15746-2"/>
    <property type="nucleotide sequence ID" value="NM_053026.3"/>
</dbReference>
<dbReference type="RefSeq" id="NP_444255.3">
    <molecule id="Q15746-3"/>
    <property type="nucleotide sequence ID" value="NM_053027.3"/>
</dbReference>
<dbReference type="RefSeq" id="NP_444256.3">
    <molecule id="Q15746-4"/>
    <property type="nucleotide sequence ID" value="NM_053028.3"/>
</dbReference>
<dbReference type="RefSeq" id="NP_444259.1">
    <molecule id="Q15746-10"/>
    <property type="nucleotide sequence ID" value="NM_053031.4"/>
</dbReference>
<dbReference type="RefSeq" id="NP_444260.1">
    <molecule id="Q15746-8"/>
    <property type="nucleotide sequence ID" value="NM_053032.4"/>
</dbReference>
<dbReference type="RefSeq" id="XP_011511162.1">
    <property type="nucleotide sequence ID" value="XM_011512860.2"/>
</dbReference>
<dbReference type="RefSeq" id="XP_016861958.1">
    <property type="nucleotide sequence ID" value="XM_017006469.1"/>
</dbReference>
<dbReference type="RefSeq" id="XP_016861960.1">
    <molecule id="Q15746-9"/>
    <property type="nucleotide sequence ID" value="XM_017006471.3"/>
</dbReference>
<dbReference type="RefSeq" id="XP_016861961.1">
    <molecule id="Q15746-8"/>
    <property type="nucleotide sequence ID" value="XM_017006472.3"/>
</dbReference>
<dbReference type="RefSeq" id="XP_016861962.1">
    <molecule id="Q15746-10"/>
    <property type="nucleotide sequence ID" value="XM_017006473.2"/>
</dbReference>
<dbReference type="RefSeq" id="XP_024309305.1">
    <molecule id="Q15746-1"/>
    <property type="nucleotide sequence ID" value="XM_024453537.2"/>
</dbReference>
<dbReference type="RefSeq" id="XP_047304140.1">
    <molecule id="Q15746-1"/>
    <property type="nucleotide sequence ID" value="XM_047448184.1"/>
</dbReference>
<dbReference type="RefSeq" id="XP_047304141.1">
    <molecule id="Q15746-1"/>
    <property type="nucleotide sequence ID" value="XM_047448185.1"/>
</dbReference>
<dbReference type="RefSeq" id="XP_054202603.1">
    <molecule id="Q15746-9"/>
    <property type="nucleotide sequence ID" value="XM_054346628.1"/>
</dbReference>
<dbReference type="RefSeq" id="XP_054202604.1">
    <molecule id="Q15746-8"/>
    <property type="nucleotide sequence ID" value="XM_054346629.1"/>
</dbReference>
<dbReference type="RefSeq" id="XP_054202605.1">
    <molecule id="Q15746-10"/>
    <property type="nucleotide sequence ID" value="XM_054346630.1"/>
</dbReference>
<dbReference type="PDB" id="2CQV">
    <property type="method" value="NMR"/>
    <property type="chains" value="A=1238-1338"/>
</dbReference>
<dbReference type="PDB" id="2K0F">
    <property type="method" value="NMR"/>
    <property type="chains" value="B=1742-1760"/>
</dbReference>
<dbReference type="PDB" id="2YR3">
    <property type="method" value="NMR"/>
    <property type="chains" value="A=510-601"/>
</dbReference>
<dbReference type="PDB" id="5JQA">
    <property type="method" value="X-ray"/>
    <property type="resolution" value="1.80 A"/>
    <property type="chains" value="B=1742-1761"/>
</dbReference>
<dbReference type="PDB" id="5JTH">
    <property type="method" value="X-ray"/>
    <property type="resolution" value="1.84 A"/>
    <property type="chains" value="B=1742-1761"/>
</dbReference>
<dbReference type="PDB" id="6C6M">
    <property type="method" value="X-ray"/>
    <property type="resolution" value="2.50 A"/>
    <property type="chains" value="A/B/C=405-507"/>
</dbReference>
<dbReference type="PDBsum" id="2CQV"/>
<dbReference type="PDBsum" id="2K0F"/>
<dbReference type="PDBsum" id="2YR3"/>
<dbReference type="PDBsum" id="5JQA"/>
<dbReference type="PDBsum" id="5JTH"/>
<dbReference type="PDBsum" id="6C6M"/>
<dbReference type="SMR" id="Q15746"/>
<dbReference type="BioGRID" id="110722">
    <property type="interactions" value="103"/>
</dbReference>
<dbReference type="CORUM" id="Q15746"/>
<dbReference type="FunCoup" id="Q15746">
    <property type="interactions" value="1146"/>
</dbReference>
<dbReference type="IntAct" id="Q15746">
    <property type="interactions" value="87"/>
</dbReference>
<dbReference type="MINT" id="Q15746"/>
<dbReference type="STRING" id="9606.ENSP00000353452"/>
<dbReference type="BindingDB" id="Q15746"/>
<dbReference type="ChEMBL" id="CHEMBL2428"/>
<dbReference type="DrugBank" id="DB12010">
    <property type="generic name" value="Fostamatinib"/>
</dbReference>
<dbReference type="DrugBank" id="DB00867">
    <property type="generic name" value="Ritodrine"/>
</dbReference>
<dbReference type="DrugCentral" id="Q15746"/>
<dbReference type="GuidetoPHARMACOLOGY" id="1552"/>
<dbReference type="GlyGen" id="Q15746">
    <property type="glycosylation" value="1 site, 1 O-linked glycan (1 site)"/>
</dbReference>
<dbReference type="iPTMnet" id="Q15746"/>
<dbReference type="MetOSite" id="Q15746"/>
<dbReference type="PhosphoSitePlus" id="Q15746"/>
<dbReference type="SwissPalm" id="Q15746"/>
<dbReference type="BioMuta" id="MYLK"/>
<dbReference type="DMDM" id="300669714"/>
<dbReference type="CPTAC" id="CPTAC-2997"/>
<dbReference type="jPOST" id="Q15746"/>
<dbReference type="MassIVE" id="Q15746"/>
<dbReference type="PaxDb" id="9606-ENSP00000353452"/>
<dbReference type="PeptideAtlas" id="Q15746"/>
<dbReference type="ProteomicsDB" id="5180"/>
<dbReference type="ProteomicsDB" id="60733">
    <molecule id="Q15746-1"/>
</dbReference>
<dbReference type="ProteomicsDB" id="60734">
    <molecule id="Q15746-2"/>
</dbReference>
<dbReference type="ProteomicsDB" id="60735">
    <molecule id="Q15746-3"/>
</dbReference>
<dbReference type="ProteomicsDB" id="60736">
    <molecule id="Q15746-4"/>
</dbReference>
<dbReference type="ProteomicsDB" id="60737">
    <molecule id="Q15746-5"/>
</dbReference>
<dbReference type="ProteomicsDB" id="60738">
    <molecule id="Q15746-6"/>
</dbReference>
<dbReference type="ProteomicsDB" id="60739">
    <molecule id="Q15746-7"/>
</dbReference>
<dbReference type="ProteomicsDB" id="60740">
    <molecule id="Q15746-8"/>
</dbReference>
<dbReference type="Pumba" id="Q15746"/>
<dbReference type="Antibodypedia" id="4044">
    <property type="antibodies" value="401 antibodies from 36 providers"/>
</dbReference>
<dbReference type="DNASU" id="4638"/>
<dbReference type="Ensembl" id="ENST00000346322.10">
    <molecule id="Q15746-4"/>
    <property type="protein sequence ID" value="ENSP00000320622.6"/>
    <property type="gene ID" value="ENSG00000065534.20"/>
</dbReference>
<dbReference type="Ensembl" id="ENST00000360304.8">
    <molecule id="Q15746-1"/>
    <property type="protein sequence ID" value="ENSP00000353452.3"/>
    <property type="gene ID" value="ENSG00000065534.20"/>
</dbReference>
<dbReference type="Ensembl" id="ENST00000360772.7">
    <molecule id="Q15746-3"/>
    <property type="protein sequence ID" value="ENSP00000354004.3"/>
    <property type="gene ID" value="ENSG00000065534.20"/>
</dbReference>
<dbReference type="Ensembl" id="ENST00000418370.6">
    <molecule id="Q15746-8"/>
    <property type="protein sequence ID" value="ENSP00000428967.1"/>
    <property type="gene ID" value="ENSG00000065534.20"/>
</dbReference>
<dbReference type="Ensembl" id="ENST00000508240.2">
    <molecule id="Q15746-9"/>
    <property type="protein sequence ID" value="ENSP00000422984.2"/>
    <property type="gene ID" value="ENSG00000065534.20"/>
</dbReference>
<dbReference type="Ensembl" id="ENST00000583087.6">
    <molecule id="Q15746-8"/>
    <property type="protein sequence ID" value="ENSP00000462118.1"/>
    <property type="gene ID" value="ENSG00000065534.20"/>
</dbReference>
<dbReference type="Ensembl" id="ENST00000685021.1">
    <molecule id="Q15746-7"/>
    <property type="protein sequence ID" value="ENSP00000508447.1"/>
    <property type="gene ID" value="ENSG00000065534.20"/>
</dbReference>
<dbReference type="Ensembl" id="ENST00000685744.1">
    <molecule id="Q15746-10"/>
    <property type="protein sequence ID" value="ENSP00000510047.1"/>
    <property type="gene ID" value="ENSG00000065534.20"/>
</dbReference>
<dbReference type="Ensembl" id="ENST00000686406.1">
    <molecule id="Q15746-6"/>
    <property type="protein sequence ID" value="ENSP00000509044.1"/>
    <property type="gene ID" value="ENSG00000065534.20"/>
</dbReference>
<dbReference type="Ensembl" id="ENST00000686761.1">
    <molecule id="Q15746-1"/>
    <property type="protein sequence ID" value="ENSP00000508758.1"/>
    <property type="gene ID" value="ENSG00000065534.20"/>
</dbReference>
<dbReference type="Ensembl" id="ENST00000687375.1">
    <molecule id="Q15746-10"/>
    <property type="protein sequence ID" value="ENSP00000509867.1"/>
    <property type="gene ID" value="ENSG00000065534.20"/>
</dbReference>
<dbReference type="Ensembl" id="ENST00000688024.1">
    <molecule id="Q15746-11"/>
    <property type="protein sequence ID" value="ENSP00000509803.1"/>
    <property type="gene ID" value="ENSG00000065534.20"/>
</dbReference>
<dbReference type="Ensembl" id="ENST00000693689.1">
    <molecule id="Q15746-2"/>
    <property type="protein sequence ID" value="ENSP00000510503.1"/>
    <property type="gene ID" value="ENSG00000065534.20"/>
</dbReference>
<dbReference type="GeneID" id="4638"/>
<dbReference type="KEGG" id="hsa:4638"/>
<dbReference type="MANE-Select" id="ENST00000360304.8">
    <property type="protein sequence ID" value="ENSP00000353452.3"/>
    <property type="RefSeq nucleotide sequence ID" value="NM_053025.4"/>
    <property type="RefSeq protein sequence ID" value="NP_444253.3"/>
</dbReference>
<dbReference type="UCSC" id="uc003egl.4">
    <molecule id="Q15746-1"/>
    <property type="organism name" value="human"/>
</dbReference>
<dbReference type="AGR" id="HGNC:7590"/>
<dbReference type="CTD" id="4638"/>
<dbReference type="DisGeNET" id="4638"/>
<dbReference type="GeneCards" id="MYLK"/>
<dbReference type="GeneReviews" id="MYLK"/>
<dbReference type="HGNC" id="HGNC:7590">
    <property type="gene designation" value="MYLK"/>
</dbReference>
<dbReference type="HPA" id="ENSG00000065534">
    <property type="expression patterns" value="Tissue enhanced (seminal vesicle, smooth muscle)"/>
</dbReference>
<dbReference type="MalaCards" id="MYLK"/>
<dbReference type="MIM" id="249210">
    <property type="type" value="phenotype"/>
</dbReference>
<dbReference type="MIM" id="600922">
    <property type="type" value="gene"/>
</dbReference>
<dbReference type="MIM" id="613780">
    <property type="type" value="phenotype"/>
</dbReference>
<dbReference type="neXtProt" id="NX_Q15746"/>
<dbReference type="OpenTargets" id="ENSG00000065534"/>
<dbReference type="Orphanet" id="91387">
    <property type="disease" value="Familial thoracic aortic aneurysm and aortic dissection"/>
</dbReference>
<dbReference type="Orphanet" id="2241">
    <property type="disease" value="Megacystis-microcolon-intestinal hypoperistalsis syndrome"/>
</dbReference>
<dbReference type="PharmGKB" id="PA31388"/>
<dbReference type="VEuPathDB" id="HostDB:ENSG00000065534"/>
<dbReference type="eggNOG" id="KOG0613">
    <property type="taxonomic scope" value="Eukaryota"/>
</dbReference>
<dbReference type="GeneTree" id="ENSGT00940000157879"/>
<dbReference type="HOGENOM" id="CLU_000288_76_2_1"/>
<dbReference type="InParanoid" id="Q15746"/>
<dbReference type="OMA" id="GAPIKTG"/>
<dbReference type="OrthoDB" id="2152335at2759"/>
<dbReference type="PAN-GO" id="Q15746">
    <property type="GO annotations" value="6 GO annotations based on evolutionary models"/>
</dbReference>
<dbReference type="PhylomeDB" id="Q15746"/>
<dbReference type="TreeFam" id="TF314166"/>
<dbReference type="BRENDA" id="2.7.11.18">
    <property type="organism ID" value="2681"/>
</dbReference>
<dbReference type="PathwayCommons" id="Q15746"/>
<dbReference type="Reactome" id="R-HSA-445355">
    <property type="pathway name" value="Smooth Muscle Contraction"/>
</dbReference>
<dbReference type="Reactome" id="R-HSA-5627123">
    <property type="pathway name" value="RHO GTPases activate PAKs"/>
</dbReference>
<dbReference type="SABIO-RK" id="Q15746"/>
<dbReference type="SignaLink" id="Q15746"/>
<dbReference type="SIGNOR" id="Q15746"/>
<dbReference type="BioGRID-ORCS" id="4638">
    <property type="hits" value="12 hits in 1156 CRISPR screens"/>
</dbReference>
<dbReference type="ChiTaRS" id="MYLK">
    <property type="organism name" value="human"/>
</dbReference>
<dbReference type="EvolutionaryTrace" id="Q15746"/>
<dbReference type="GeneWiki" id="MYLK"/>
<dbReference type="GenomeRNAi" id="4638"/>
<dbReference type="Pharos" id="Q15746">
    <property type="development level" value="Tchem"/>
</dbReference>
<dbReference type="PRO" id="PR:Q15746"/>
<dbReference type="Proteomes" id="UP000005640">
    <property type="component" value="Chromosome 3"/>
</dbReference>
<dbReference type="RNAct" id="Q15746">
    <property type="molecule type" value="protein"/>
</dbReference>
<dbReference type="Bgee" id="ENSG00000065534">
    <property type="expression patterns" value="Expressed in cauda epididymis and 212 other cell types or tissues"/>
</dbReference>
<dbReference type="ExpressionAtlas" id="Q15746">
    <property type="expression patterns" value="baseline and differential"/>
</dbReference>
<dbReference type="GO" id="GO:0015629">
    <property type="term" value="C:actin cytoskeleton"/>
    <property type="evidence" value="ECO:0000314"/>
    <property type="project" value="HPA"/>
</dbReference>
<dbReference type="GO" id="GO:0032154">
    <property type="term" value="C:cleavage furrow"/>
    <property type="evidence" value="ECO:0000314"/>
    <property type="project" value="UniProtKB"/>
</dbReference>
<dbReference type="GO" id="GO:0005737">
    <property type="term" value="C:cytoplasm"/>
    <property type="evidence" value="ECO:0000314"/>
    <property type="project" value="UniProtKB"/>
</dbReference>
<dbReference type="GO" id="GO:0005829">
    <property type="term" value="C:cytosol"/>
    <property type="evidence" value="ECO:0000304"/>
    <property type="project" value="Reactome"/>
</dbReference>
<dbReference type="GO" id="GO:0030027">
    <property type="term" value="C:lamellipodium"/>
    <property type="evidence" value="ECO:0000314"/>
    <property type="project" value="UniProtKB"/>
</dbReference>
<dbReference type="GO" id="GO:0005886">
    <property type="term" value="C:plasma membrane"/>
    <property type="evidence" value="ECO:0000314"/>
    <property type="project" value="HPA"/>
</dbReference>
<dbReference type="GO" id="GO:0001725">
    <property type="term" value="C:stress fiber"/>
    <property type="evidence" value="ECO:0000314"/>
    <property type="project" value="UniProtKB"/>
</dbReference>
<dbReference type="GO" id="GO:0045202">
    <property type="term" value="C:synapse"/>
    <property type="evidence" value="ECO:0007669"/>
    <property type="project" value="Ensembl"/>
</dbReference>
<dbReference type="GO" id="GO:0003779">
    <property type="term" value="F:actin binding"/>
    <property type="evidence" value="ECO:0007669"/>
    <property type="project" value="UniProtKB-KW"/>
</dbReference>
<dbReference type="GO" id="GO:0005524">
    <property type="term" value="F:ATP binding"/>
    <property type="evidence" value="ECO:0007669"/>
    <property type="project" value="UniProtKB-KW"/>
</dbReference>
<dbReference type="GO" id="GO:0005516">
    <property type="term" value="F:calmodulin binding"/>
    <property type="evidence" value="ECO:0007669"/>
    <property type="project" value="UniProtKB-KW"/>
</dbReference>
<dbReference type="GO" id="GO:0046872">
    <property type="term" value="F:metal ion binding"/>
    <property type="evidence" value="ECO:0007669"/>
    <property type="project" value="UniProtKB-KW"/>
</dbReference>
<dbReference type="GO" id="GO:0004687">
    <property type="term" value="F:myosin light chain kinase activity"/>
    <property type="evidence" value="ECO:0000314"/>
    <property type="project" value="UniProtKB"/>
</dbReference>
<dbReference type="GO" id="GO:0097110">
    <property type="term" value="F:scaffold protein binding"/>
    <property type="evidence" value="ECO:0000353"/>
    <property type="project" value="ARUK-UCL"/>
</dbReference>
<dbReference type="GO" id="GO:0060414">
    <property type="term" value="P:aorta smooth muscle tissue morphogenesis"/>
    <property type="evidence" value="ECO:0000315"/>
    <property type="project" value="BHF-UCL"/>
</dbReference>
<dbReference type="GO" id="GO:0032060">
    <property type="term" value="P:bleb assembly"/>
    <property type="evidence" value="ECO:0000315"/>
    <property type="project" value="UniProtKB"/>
</dbReference>
<dbReference type="GO" id="GO:0071476">
    <property type="term" value="P:cellular hypotonic response"/>
    <property type="evidence" value="ECO:0000314"/>
    <property type="project" value="UniProtKB"/>
</dbReference>
<dbReference type="GO" id="GO:0051928">
    <property type="term" value="P:positive regulation of calcium ion transport"/>
    <property type="evidence" value="ECO:0000314"/>
    <property type="project" value="UniProtKB"/>
</dbReference>
<dbReference type="GO" id="GO:0030335">
    <property type="term" value="P:positive regulation of cell migration"/>
    <property type="evidence" value="ECO:0000314"/>
    <property type="project" value="UniProtKB"/>
</dbReference>
<dbReference type="GO" id="GO:0090303">
    <property type="term" value="P:positive regulation of wound healing"/>
    <property type="evidence" value="ECO:0000314"/>
    <property type="project" value="UniProtKB"/>
</dbReference>
<dbReference type="GO" id="GO:0006468">
    <property type="term" value="P:protein phosphorylation"/>
    <property type="evidence" value="ECO:0000304"/>
    <property type="project" value="ProtInc"/>
</dbReference>
<dbReference type="GO" id="GO:1900242">
    <property type="term" value="P:regulation of synaptic vesicle endocytosis"/>
    <property type="evidence" value="ECO:0007669"/>
    <property type="project" value="Ensembl"/>
</dbReference>
<dbReference type="GO" id="GO:0006939">
    <property type="term" value="P:smooth muscle contraction"/>
    <property type="evidence" value="ECO:0000250"/>
    <property type="project" value="UniProtKB"/>
</dbReference>
<dbReference type="GO" id="GO:0014820">
    <property type="term" value="P:tonic smooth muscle contraction"/>
    <property type="evidence" value="ECO:0000250"/>
    <property type="project" value="UniProtKB"/>
</dbReference>
<dbReference type="CDD" id="cd00063">
    <property type="entry name" value="FN3"/>
    <property type="match status" value="1"/>
</dbReference>
<dbReference type="CDD" id="cd20978">
    <property type="entry name" value="IgI_4_hemolin-like"/>
    <property type="match status" value="1"/>
</dbReference>
<dbReference type="CDD" id="cd20976">
    <property type="entry name" value="IgI_4_MYLK-like"/>
    <property type="match status" value="1"/>
</dbReference>
<dbReference type="CDD" id="cd05762">
    <property type="entry name" value="IgI_8_hMLCK_like"/>
    <property type="match status" value="1"/>
</dbReference>
<dbReference type="CDD" id="cd20973">
    <property type="entry name" value="IgI_telokin-like"/>
    <property type="match status" value="1"/>
</dbReference>
<dbReference type="CDD" id="cd14191">
    <property type="entry name" value="STKc_MLCK1"/>
    <property type="match status" value="1"/>
</dbReference>
<dbReference type="FunFam" id="2.60.40.10:FF:000147">
    <property type="entry name" value="Myosin light chain kinase"/>
    <property type="match status" value="1"/>
</dbReference>
<dbReference type="FunFam" id="2.60.40.10:FF:000425">
    <property type="entry name" value="Myosin light chain kinase"/>
    <property type="match status" value="1"/>
</dbReference>
<dbReference type="FunFam" id="1.10.510.10:FF:000175">
    <property type="entry name" value="Myosin light chain kinase, smooth muscle"/>
    <property type="match status" value="1"/>
</dbReference>
<dbReference type="FunFam" id="2.60.40.10:FF:000080">
    <property type="entry name" value="Myosin light chain kinase, smooth muscle"/>
    <property type="match status" value="3"/>
</dbReference>
<dbReference type="FunFam" id="2.60.40.10:FF:000145">
    <property type="entry name" value="Myosin light chain kinase, smooth muscle"/>
    <property type="match status" value="1"/>
</dbReference>
<dbReference type="FunFam" id="2.60.40.10:FF:000297">
    <property type="entry name" value="Myosin light chain kinase, smooth muscle"/>
    <property type="match status" value="1"/>
</dbReference>
<dbReference type="FunFam" id="2.60.40.10:FF:000372">
    <property type="entry name" value="Myosin light chain kinase, smooth muscle"/>
    <property type="match status" value="1"/>
</dbReference>
<dbReference type="FunFam" id="2.60.40.10:FF:000516">
    <property type="entry name" value="Myosin light chain kinase, smooth muscle"/>
    <property type="match status" value="1"/>
</dbReference>
<dbReference type="FunFam" id="2.60.40.10:FF:000580">
    <property type="entry name" value="Myosin light chain kinase, smooth muscle"/>
    <property type="match status" value="1"/>
</dbReference>
<dbReference type="FunFam" id="3.30.200.20:FF:000198">
    <property type="entry name" value="Myosin light chain kinase, smooth muscle"/>
    <property type="match status" value="1"/>
</dbReference>
<dbReference type="Gene3D" id="2.60.40.10">
    <property type="entry name" value="Immunoglobulins"/>
    <property type="match status" value="10"/>
</dbReference>
<dbReference type="Gene3D" id="3.30.200.20">
    <property type="entry name" value="Phosphorylase Kinase, domain 1"/>
    <property type="match status" value="1"/>
</dbReference>
<dbReference type="Gene3D" id="1.10.510.10">
    <property type="entry name" value="Transferase(Phosphotransferase) domain 1"/>
    <property type="match status" value="1"/>
</dbReference>
<dbReference type="InterPro" id="IPR003961">
    <property type="entry name" value="FN3_dom"/>
</dbReference>
<dbReference type="InterPro" id="IPR036116">
    <property type="entry name" value="FN3_sf"/>
</dbReference>
<dbReference type="InterPro" id="IPR007110">
    <property type="entry name" value="Ig-like_dom"/>
</dbReference>
<dbReference type="InterPro" id="IPR036179">
    <property type="entry name" value="Ig-like_dom_sf"/>
</dbReference>
<dbReference type="InterPro" id="IPR013783">
    <property type="entry name" value="Ig-like_fold"/>
</dbReference>
<dbReference type="InterPro" id="IPR013098">
    <property type="entry name" value="Ig_I-set"/>
</dbReference>
<dbReference type="InterPro" id="IPR003599">
    <property type="entry name" value="Ig_sub"/>
</dbReference>
<dbReference type="InterPro" id="IPR003598">
    <property type="entry name" value="Ig_sub2"/>
</dbReference>
<dbReference type="InterPro" id="IPR011009">
    <property type="entry name" value="Kinase-like_dom_sf"/>
</dbReference>
<dbReference type="InterPro" id="IPR015725">
    <property type="entry name" value="MLCK1_kinase_dom"/>
</dbReference>
<dbReference type="InterPro" id="IPR000719">
    <property type="entry name" value="Prot_kinase_dom"/>
</dbReference>
<dbReference type="InterPro" id="IPR017441">
    <property type="entry name" value="Protein_kinase_ATP_BS"/>
</dbReference>
<dbReference type="InterPro" id="IPR008271">
    <property type="entry name" value="Ser/Thr_kinase_AS"/>
</dbReference>
<dbReference type="PANTHER" id="PTHR47633">
    <property type="entry name" value="IMMUNOGLOBULIN"/>
    <property type="match status" value="1"/>
</dbReference>
<dbReference type="PANTHER" id="PTHR47633:SF3">
    <property type="entry name" value="STRIATED MUSCLE PREFERENTIALLY EXPRESSED PROTEIN KINASE"/>
    <property type="match status" value="1"/>
</dbReference>
<dbReference type="Pfam" id="PF16620">
    <property type="entry name" value="23ISL"/>
    <property type="match status" value="1"/>
</dbReference>
<dbReference type="Pfam" id="PF00041">
    <property type="entry name" value="fn3"/>
    <property type="match status" value="1"/>
</dbReference>
<dbReference type="Pfam" id="PF07679">
    <property type="entry name" value="I-set"/>
    <property type="match status" value="9"/>
</dbReference>
<dbReference type="Pfam" id="PF00069">
    <property type="entry name" value="Pkinase"/>
    <property type="match status" value="1"/>
</dbReference>
<dbReference type="SMART" id="SM00060">
    <property type="entry name" value="FN3"/>
    <property type="match status" value="1"/>
</dbReference>
<dbReference type="SMART" id="SM00409">
    <property type="entry name" value="IG"/>
    <property type="match status" value="9"/>
</dbReference>
<dbReference type="SMART" id="SM00408">
    <property type="entry name" value="IGc2"/>
    <property type="match status" value="9"/>
</dbReference>
<dbReference type="SMART" id="SM00220">
    <property type="entry name" value="S_TKc"/>
    <property type="match status" value="1"/>
</dbReference>
<dbReference type="SUPFAM" id="SSF49265">
    <property type="entry name" value="Fibronectin type III"/>
    <property type="match status" value="1"/>
</dbReference>
<dbReference type="SUPFAM" id="SSF48726">
    <property type="entry name" value="Immunoglobulin"/>
    <property type="match status" value="9"/>
</dbReference>
<dbReference type="SUPFAM" id="SSF56112">
    <property type="entry name" value="Protein kinase-like (PK-like)"/>
    <property type="match status" value="1"/>
</dbReference>
<dbReference type="PROSITE" id="PS50853">
    <property type="entry name" value="FN3"/>
    <property type="match status" value="1"/>
</dbReference>
<dbReference type="PROSITE" id="PS50835">
    <property type="entry name" value="IG_LIKE"/>
    <property type="match status" value="9"/>
</dbReference>
<dbReference type="PROSITE" id="PS00107">
    <property type="entry name" value="PROTEIN_KINASE_ATP"/>
    <property type="match status" value="1"/>
</dbReference>
<dbReference type="PROSITE" id="PS50011">
    <property type="entry name" value="PROTEIN_KINASE_DOM"/>
    <property type="match status" value="1"/>
</dbReference>
<dbReference type="PROSITE" id="PS00108">
    <property type="entry name" value="PROTEIN_KINASE_ST"/>
    <property type="match status" value="1"/>
</dbReference>
<protein>
    <recommendedName>
        <fullName evidence="45">Myosin light chain kinase, smooth muscle</fullName>
        <shortName>MLCK</shortName>
        <shortName>smMLCK</shortName>
        <ecNumber evidence="9">2.7.11.18</ecNumber>
    </recommendedName>
    <alternativeName>
        <fullName>Kinase-related protein</fullName>
        <shortName>KRP</shortName>
    </alternativeName>
    <alternativeName>
        <fullName>Telokin</fullName>
    </alternativeName>
    <component>
        <recommendedName>
            <fullName>Myosin light chain kinase, smooth muscle, deglutamylated form</fullName>
        </recommendedName>
    </component>
</protein>
<reference key="1">
    <citation type="journal article" date="1995" name="Genomics">
        <title>The human myosin light chain kinase (MLCK) from hippocampus: cloning, sequencing, expression, and localization to 3qcen-q21.</title>
        <authorList>
            <person name="Potier M.-C."/>
            <person name="Chelot E."/>
            <person name="Pekarsky Y."/>
            <person name="Gardiner K."/>
            <person name="Rossier J."/>
            <person name="Turnell W.G."/>
        </authorList>
    </citation>
    <scope>NUCLEOTIDE SEQUENCE [MRNA] (ISOFORM 9)</scope>
    <scope>TISSUE SPECIFICITY</scope>
    <source>
        <tissue>Hippocampus</tissue>
    </source>
</reference>
<reference key="2">
    <citation type="journal article" date="1997" name="Am. J. Respir. Cell Mol. Biol.">
        <title>Myosin light chain kinase in endothelium: molecular cloning and regulation.</title>
        <authorList>
            <person name="Garcia J.G.N."/>
            <person name="Lazar V.L."/>
            <person name="Gilbert-Mcclain L.I."/>
            <person name="Gallagher P.J."/>
            <person name="Verin A.D."/>
        </authorList>
    </citation>
    <scope>NUCLEOTIDE SEQUENCE [MRNA] (ISOFORM 1)</scope>
    <source>
        <tissue>Umbilical vein endothelial cell</tissue>
    </source>
</reference>
<reference key="3">
    <citation type="journal article" date="1999" name="Genomics">
        <title>A single human myosin light chain kinase gene (MLCK; MYLK).</title>
        <authorList>
            <person name="Lazar V.L."/>
            <person name="Garcia J.G.N."/>
        </authorList>
    </citation>
    <scope>NUCLEOTIDE SEQUENCE [MRNA] (ISOFORMS 2; 3A AND 3B)</scope>
    <scope>NUCLEOTIDE SEQUENCE [MRNA] OF 1281-1914 (ISOFORM 4)</scope>
    <source>
        <tissue>Umbilical vein</tissue>
    </source>
</reference>
<reference key="4">
    <citation type="journal article" date="2001" name="J. Biol. Chem.">
        <title>Differential regulation of alternatively spliced endothelial cell myosin light chain kinase isoforms by p60(Src).</title>
        <authorList>
            <person name="Birukov K.G."/>
            <person name="Csortos C."/>
            <person name="Marzilli L."/>
            <person name="Dudek S."/>
            <person name="Ma S.-F."/>
            <person name="Bresnick A.R."/>
            <person name="Verin A.D."/>
            <person name="Cotter R.J."/>
            <person name="Garcia J.G.N."/>
        </authorList>
    </citation>
    <scope>SEQUENCE REVISION (ISOFORMS 1 AND 2)</scope>
    <scope>PROTEIN SEQUENCE OF 457-476 AND 968-985</scope>
    <scope>FUNCTION</scope>
    <scope>CATALYTIC ACTIVITY</scope>
    <scope>BIOPHYSICOCHEMICAL PROPERTIES</scope>
    <scope>PHOSPHORYLATION AT TYR-464 AND TYR-471</scope>
    <scope>CALMODULIN-BINDING</scope>
    <scope>ACTIVITY REGULATION</scope>
</reference>
<reference key="5">
    <citation type="journal article" date="1999" name="J. Cell. Biochem.">
        <title>Analysis of the kinase-related protein gene found at human chromosome 3q21 in a multi-gene cluster: organization, expression, alternative splicing and polymorphic marker.</title>
        <authorList>
            <person name="Watterson D.M."/>
            <person name="Schavocky J.P."/>
            <person name="Guo L."/>
            <person name="Weiss C."/>
            <person name="Chlenski A."/>
            <person name="Shrinsky V.P."/>
            <person name="Van Eldik L.J."/>
            <person name="Haiech J."/>
        </authorList>
    </citation>
    <scope>NUCLEOTIDE SEQUENCE [MRNA] (ISOFORM 6)</scope>
    <scope>NUCLEOTIDE SEQUENCE [GENOMIC DNA / MRNA] (ISOFORM 8)</scope>
    <scope>NUCLEOTIDE SEQUENCE [GENOMIC DNA] OF 1614-1914 (ISOFORM 9/DEL-1790)</scope>
    <scope>TISSUE SPECIFICITY</scope>
    <source>
        <tissue>Lung</tissue>
        <tissue>Placenta</tissue>
    </source>
</reference>
<reference key="6">
    <citation type="journal article" date="2004" name="J. Biol. Chem.">
        <title>A differentiation-dependent splice variant of myosin light chain kinase, MLCK1, regulates epithelial tight junction permeability.</title>
        <authorList>
            <person name="Clayburgh D.R."/>
            <person name="Rosen S."/>
            <person name="Witkowski E.D."/>
            <person name="Wang F."/>
            <person name="Blair S."/>
            <person name="Dudek S."/>
            <person name="Garcia J.G."/>
            <person name="Alverdy J.C."/>
            <person name="Turner J.R."/>
        </authorList>
    </citation>
    <scope>NUCLEOTIDE SEQUENCE [MRNA] (ISOFORMS 1 AND 2)</scope>
    <source>
        <tissue>Intestinal epithelium</tissue>
    </source>
</reference>
<reference key="7">
    <citation type="journal article" date="2004" name="J. Cell Sci.">
        <title>The N-terminus of the long MLCK induces a disruption in normal spindle morphology and metaphase arrest.</title>
        <authorList>
            <person name="Dulyaninova N.G."/>
            <person name="Patskovsky Y.V."/>
            <person name="Bresnick A.R."/>
        </authorList>
    </citation>
    <scope>NUCLEOTIDE SEQUENCE [MRNA] (ISOFORM 1)</scope>
    <scope>FUNCTION IN CELL CYCLE</scope>
    <scope>SUBCELLULAR LOCATION</scope>
    <source>
        <tissue>Cervix carcinoma</tissue>
    </source>
</reference>
<reference key="8">
    <citation type="submission" date="2000-01" db="EMBL/GenBank/DDBJ databases">
        <title>HeLa myosin light chain kinase.</title>
        <authorList>
            <person name="Kikuchi A."/>
            <person name="Murata-Hori M."/>
            <person name="Hosoya H."/>
        </authorList>
    </citation>
    <scope>NUCLEOTIDE SEQUENCE [MRNA] (ISOFORM 5)</scope>
    <source>
        <tissue>Cervix carcinoma</tissue>
    </source>
</reference>
<reference key="9">
    <citation type="journal article" date="2004" name="Nat. Genet.">
        <title>Complete sequencing and characterization of 21,243 full-length human cDNAs.</title>
        <authorList>
            <person name="Ota T."/>
            <person name="Suzuki Y."/>
            <person name="Nishikawa T."/>
            <person name="Otsuki T."/>
            <person name="Sugiyama T."/>
            <person name="Irie R."/>
            <person name="Wakamatsu A."/>
            <person name="Hayashi K."/>
            <person name="Sato H."/>
            <person name="Nagai K."/>
            <person name="Kimura K."/>
            <person name="Makita H."/>
            <person name="Sekine M."/>
            <person name="Obayashi M."/>
            <person name="Nishi T."/>
            <person name="Shibahara T."/>
            <person name="Tanaka T."/>
            <person name="Ishii S."/>
            <person name="Yamamoto J."/>
            <person name="Saito K."/>
            <person name="Kawai Y."/>
            <person name="Isono Y."/>
            <person name="Nakamura Y."/>
            <person name="Nagahari K."/>
            <person name="Murakami K."/>
            <person name="Yasuda T."/>
            <person name="Iwayanagi T."/>
            <person name="Wagatsuma M."/>
            <person name="Shiratori A."/>
            <person name="Sudo H."/>
            <person name="Hosoiri T."/>
            <person name="Kaku Y."/>
            <person name="Kodaira H."/>
            <person name="Kondo H."/>
            <person name="Sugawara M."/>
            <person name="Takahashi M."/>
            <person name="Kanda K."/>
            <person name="Yokoi T."/>
            <person name="Furuya T."/>
            <person name="Kikkawa E."/>
            <person name="Omura Y."/>
            <person name="Abe K."/>
            <person name="Kamihara K."/>
            <person name="Katsuta N."/>
            <person name="Sato K."/>
            <person name="Tanikawa M."/>
            <person name="Yamazaki M."/>
            <person name="Ninomiya K."/>
            <person name="Ishibashi T."/>
            <person name="Yamashita H."/>
            <person name="Murakawa K."/>
            <person name="Fujimori K."/>
            <person name="Tanai H."/>
            <person name="Kimata M."/>
            <person name="Watanabe M."/>
            <person name="Hiraoka S."/>
            <person name="Chiba Y."/>
            <person name="Ishida S."/>
            <person name="Ono Y."/>
            <person name="Takiguchi S."/>
            <person name="Watanabe S."/>
            <person name="Yosida M."/>
            <person name="Hotuta T."/>
            <person name="Kusano J."/>
            <person name="Kanehori K."/>
            <person name="Takahashi-Fujii A."/>
            <person name="Hara H."/>
            <person name="Tanase T.-O."/>
            <person name="Nomura Y."/>
            <person name="Togiya S."/>
            <person name="Komai F."/>
            <person name="Hara R."/>
            <person name="Takeuchi K."/>
            <person name="Arita M."/>
            <person name="Imose N."/>
            <person name="Musashino K."/>
            <person name="Yuuki H."/>
            <person name="Oshima A."/>
            <person name="Sasaki N."/>
            <person name="Aotsuka S."/>
            <person name="Yoshikawa Y."/>
            <person name="Matsunawa H."/>
            <person name="Ichihara T."/>
            <person name="Shiohata N."/>
            <person name="Sano S."/>
            <person name="Moriya S."/>
            <person name="Momiyama H."/>
            <person name="Satoh N."/>
            <person name="Takami S."/>
            <person name="Terashima Y."/>
            <person name="Suzuki O."/>
            <person name="Nakagawa S."/>
            <person name="Senoh A."/>
            <person name="Mizoguchi H."/>
            <person name="Goto Y."/>
            <person name="Shimizu F."/>
            <person name="Wakebe H."/>
            <person name="Hishigaki H."/>
            <person name="Watanabe T."/>
            <person name="Sugiyama A."/>
            <person name="Takemoto M."/>
            <person name="Kawakami B."/>
            <person name="Yamazaki M."/>
            <person name="Watanabe K."/>
            <person name="Kumagai A."/>
            <person name="Itakura S."/>
            <person name="Fukuzumi Y."/>
            <person name="Fujimori Y."/>
            <person name="Komiyama M."/>
            <person name="Tashiro H."/>
            <person name="Tanigami A."/>
            <person name="Fujiwara T."/>
            <person name="Ono T."/>
            <person name="Yamada K."/>
            <person name="Fujii Y."/>
            <person name="Ozaki K."/>
            <person name="Hirao M."/>
            <person name="Ohmori Y."/>
            <person name="Kawabata A."/>
            <person name="Hikiji T."/>
            <person name="Kobatake N."/>
            <person name="Inagaki H."/>
            <person name="Ikema Y."/>
            <person name="Okamoto S."/>
            <person name="Okitani R."/>
            <person name="Kawakami T."/>
            <person name="Noguchi S."/>
            <person name="Itoh T."/>
            <person name="Shigeta K."/>
            <person name="Senba T."/>
            <person name="Matsumura K."/>
            <person name="Nakajima Y."/>
            <person name="Mizuno T."/>
            <person name="Morinaga M."/>
            <person name="Sasaki M."/>
            <person name="Togashi T."/>
            <person name="Oyama M."/>
            <person name="Hata H."/>
            <person name="Watanabe M."/>
            <person name="Komatsu T."/>
            <person name="Mizushima-Sugano J."/>
            <person name="Satoh T."/>
            <person name="Shirai Y."/>
            <person name="Takahashi Y."/>
            <person name="Nakagawa K."/>
            <person name="Okumura K."/>
            <person name="Nagase T."/>
            <person name="Nomura N."/>
            <person name="Kikuchi H."/>
            <person name="Masuho Y."/>
            <person name="Yamashita R."/>
            <person name="Nakai K."/>
            <person name="Yada T."/>
            <person name="Nakamura Y."/>
            <person name="Ohara O."/>
            <person name="Isogai T."/>
            <person name="Sugano S."/>
        </authorList>
    </citation>
    <scope>NUCLEOTIDE SEQUENCE [LARGE SCALE MRNA] (ISOFORMS 6; 7 AND 8)</scope>
    <source>
        <tissue>Testis</tissue>
    </source>
</reference>
<reference key="10">
    <citation type="journal article" date="2006" name="Nature">
        <title>The DNA sequence, annotation and analysis of human chromosome 3.</title>
        <authorList>
            <person name="Muzny D.M."/>
            <person name="Scherer S.E."/>
            <person name="Kaul R."/>
            <person name="Wang J."/>
            <person name="Yu J."/>
            <person name="Sudbrak R."/>
            <person name="Buhay C.J."/>
            <person name="Chen R."/>
            <person name="Cree A."/>
            <person name="Ding Y."/>
            <person name="Dugan-Rocha S."/>
            <person name="Gill R."/>
            <person name="Gunaratne P."/>
            <person name="Harris R.A."/>
            <person name="Hawes A.C."/>
            <person name="Hernandez J."/>
            <person name="Hodgson A.V."/>
            <person name="Hume J."/>
            <person name="Jackson A."/>
            <person name="Khan Z.M."/>
            <person name="Kovar-Smith C."/>
            <person name="Lewis L.R."/>
            <person name="Lozado R.J."/>
            <person name="Metzker M.L."/>
            <person name="Milosavljevic A."/>
            <person name="Miner G.R."/>
            <person name="Morgan M.B."/>
            <person name="Nazareth L.V."/>
            <person name="Scott G."/>
            <person name="Sodergren E."/>
            <person name="Song X.-Z."/>
            <person name="Steffen D."/>
            <person name="Wei S."/>
            <person name="Wheeler D.A."/>
            <person name="Wright M.W."/>
            <person name="Worley K.C."/>
            <person name="Yuan Y."/>
            <person name="Zhang Z."/>
            <person name="Adams C.Q."/>
            <person name="Ansari-Lari M.A."/>
            <person name="Ayele M."/>
            <person name="Brown M.J."/>
            <person name="Chen G."/>
            <person name="Chen Z."/>
            <person name="Clendenning J."/>
            <person name="Clerc-Blankenburg K.P."/>
            <person name="Chen R."/>
            <person name="Chen Z."/>
            <person name="Davis C."/>
            <person name="Delgado O."/>
            <person name="Dinh H.H."/>
            <person name="Dong W."/>
            <person name="Draper H."/>
            <person name="Ernst S."/>
            <person name="Fu G."/>
            <person name="Gonzalez-Garay M.L."/>
            <person name="Garcia D.K."/>
            <person name="Gillett W."/>
            <person name="Gu J."/>
            <person name="Hao B."/>
            <person name="Haugen E."/>
            <person name="Havlak P."/>
            <person name="He X."/>
            <person name="Hennig S."/>
            <person name="Hu S."/>
            <person name="Huang W."/>
            <person name="Jackson L.R."/>
            <person name="Jacob L.S."/>
            <person name="Kelly S.H."/>
            <person name="Kube M."/>
            <person name="Levy R."/>
            <person name="Li Z."/>
            <person name="Liu B."/>
            <person name="Liu J."/>
            <person name="Liu W."/>
            <person name="Lu J."/>
            <person name="Maheshwari M."/>
            <person name="Nguyen B.-V."/>
            <person name="Okwuonu G.O."/>
            <person name="Palmeiri A."/>
            <person name="Pasternak S."/>
            <person name="Perez L.M."/>
            <person name="Phelps K.A."/>
            <person name="Plopper F.J."/>
            <person name="Qiang B."/>
            <person name="Raymond C."/>
            <person name="Rodriguez R."/>
            <person name="Saenphimmachak C."/>
            <person name="Santibanez J."/>
            <person name="Shen H."/>
            <person name="Shen Y."/>
            <person name="Subramanian S."/>
            <person name="Tabor P.E."/>
            <person name="Verduzco D."/>
            <person name="Waldron L."/>
            <person name="Wang J."/>
            <person name="Wang J."/>
            <person name="Wang Q."/>
            <person name="Williams G.A."/>
            <person name="Wong G.K.-S."/>
            <person name="Yao Z."/>
            <person name="Zhang J."/>
            <person name="Zhang X."/>
            <person name="Zhao G."/>
            <person name="Zhou J."/>
            <person name="Zhou Y."/>
            <person name="Nelson D."/>
            <person name="Lehrach H."/>
            <person name="Reinhardt R."/>
            <person name="Naylor S.L."/>
            <person name="Yang H."/>
            <person name="Olson M."/>
            <person name="Weinstock G."/>
            <person name="Gibbs R.A."/>
        </authorList>
    </citation>
    <scope>NUCLEOTIDE SEQUENCE [LARGE SCALE GENOMIC DNA]</scope>
</reference>
<reference key="11">
    <citation type="submission" date="2005-09" db="EMBL/GenBank/DDBJ databases">
        <authorList>
            <person name="Mural R.J."/>
            <person name="Istrail S."/>
            <person name="Sutton G."/>
            <person name="Florea L."/>
            <person name="Halpern A.L."/>
            <person name="Mobarry C.M."/>
            <person name="Lippert R."/>
            <person name="Walenz B."/>
            <person name="Shatkay H."/>
            <person name="Dew I."/>
            <person name="Miller J.R."/>
            <person name="Flanigan M.J."/>
            <person name="Edwards N.J."/>
            <person name="Bolanos R."/>
            <person name="Fasulo D."/>
            <person name="Halldorsson B.V."/>
            <person name="Hannenhalli S."/>
            <person name="Turner R."/>
            <person name="Yooseph S."/>
            <person name="Lu F."/>
            <person name="Nusskern D.R."/>
            <person name="Shue B.C."/>
            <person name="Zheng X.H."/>
            <person name="Zhong F."/>
            <person name="Delcher A.L."/>
            <person name="Huson D.H."/>
            <person name="Kravitz S.A."/>
            <person name="Mouchard L."/>
            <person name="Reinert K."/>
            <person name="Remington K.A."/>
            <person name="Clark A.G."/>
            <person name="Waterman M.S."/>
            <person name="Eichler E.E."/>
            <person name="Adams M.D."/>
            <person name="Hunkapiller M.W."/>
            <person name="Myers E.W."/>
            <person name="Venter J.C."/>
        </authorList>
    </citation>
    <scope>NUCLEOTIDE SEQUENCE [LARGE SCALE GENOMIC DNA]</scope>
</reference>
<reference key="12">
    <citation type="journal article" date="2004" name="Genome Res.">
        <title>The status, quality, and expansion of the NIH full-length cDNA project: the Mammalian Gene Collection (MGC).</title>
        <authorList>
            <consortium name="The MGC Project Team"/>
        </authorList>
    </citation>
    <scope>NUCLEOTIDE SEQUENCE [LARGE SCALE MRNA] (ISOFORMS 6 AND 8)</scope>
</reference>
<reference key="13">
    <citation type="submission" date="1995-11" db="EMBL/GenBank/DDBJ databases">
        <authorList>
            <person name="Watterson D.M."/>
        </authorList>
    </citation>
    <scope>NUCLEOTIDE SEQUENCE [MRNA] OF 1456-1914 (ISOFORM 9/DEL-1790)</scope>
    <source>
        <tissue>Placenta</tissue>
    </source>
</reference>
<reference key="14">
    <citation type="journal article" date="2002" name="Biochem. Biophys. Res. Commun.">
        <title>Novel interaction of cortactin with endothelial cell myosin light chain kinase.</title>
        <authorList>
            <person name="Dudek S.M."/>
            <person name="Birukov K.G."/>
            <person name="Zhan X."/>
            <person name="Garcia J.G.N."/>
        </authorList>
    </citation>
    <scope>INTERACTION WITH CTTN</scope>
    <scope>PHOSPHORYLATION AT TYR-464 AND TYR-471 BY SRC</scope>
</reference>
<reference key="15">
    <citation type="journal article" date="2002" name="Pflugers Arch.">
        <title>Myosin light chain kinase modulates hypotonicity-induced Ca2+ entry and Cl- channel activity in human cervical cancer cells.</title>
        <authorList>
            <person name="Shen M.-R."/>
            <person name="Furla P."/>
            <person name="Chou C.-Y."/>
            <person name="Ellory J.C."/>
        </authorList>
    </citation>
    <scope>FUNCTION IN HYPOTONICITY RESPONSE</scope>
    <scope>ACTIVITY REGULATION</scope>
</reference>
<reference key="16">
    <citation type="journal article" date="2004" name="FEBS Lett.">
        <title>Quantitative measurements of Ca(2+)/calmodulin binding and activation of myosin light chain kinase in cells.</title>
        <authorList>
            <person name="Geguchadze R."/>
            <person name="Zhi G."/>
            <person name="Lau K.S."/>
            <person name="Isotani E."/>
            <person name="Persechini A."/>
            <person name="Kamm K.E."/>
            <person name="Stull J.T."/>
        </authorList>
    </citation>
    <scope>ACTIVITY REGULATION BY CALCIUM</scope>
</reference>
<reference key="17">
    <citation type="journal article" date="2005" name="Gastroenterology">
        <title>Distinct temporal-spatial roles for rho kinase and myosin light chain kinase in epithelial purse-string wound closure.</title>
        <authorList>
            <person name="Russo J.M."/>
            <person name="Florian P."/>
            <person name="Shen L."/>
            <person name="Graham W.V."/>
            <person name="Tretiakova M.S."/>
            <person name="Gitter A.H."/>
            <person name="Mrsny R.J."/>
            <person name="Turner J.R."/>
        </authorList>
    </citation>
    <scope>FUNCTION IN WOUND HEALING</scope>
</reference>
<reference key="18">
    <citation type="journal article" date="2006" name="J. Biol. Chem.">
        <title>Tumor necrosis factor-induced long myosin light chain kinase transcription is regulated by differentiation-dependent signaling events. Characterization of the human long myosin light chain kinase promoter.</title>
        <authorList>
            <person name="Graham W.V."/>
            <person name="Wang F."/>
            <person name="Clayburgh D.R."/>
            <person name="Cheng J.X."/>
            <person name="Yoon B."/>
            <person name="Wang Y."/>
            <person name="Lin A."/>
            <person name="Turner J.R."/>
        </authorList>
    </citation>
    <scope>INDUCTION BY TNF</scope>
    <scope>TISSUE SPECIFICITY</scope>
    <scope>ALTERNATIVE PROMOTER USAGE (ISOFORMS 1/2/3A/3B/4/DEL-1790)</scope>
</reference>
<reference key="19">
    <citation type="journal article" date="2006" name="J. Cell Sci.">
        <title>Myosin light chain kinase plays a role in the regulation of epithelial cell survival.</title>
        <authorList>
            <person name="Connell L.E."/>
            <person name="Helfman D.M."/>
        </authorList>
    </citation>
    <scope>FUNCTION IN EPITHELIAL CELL SURVIVAL</scope>
    <scope>ACTIVITY REGULATION</scope>
</reference>
<reference key="20">
    <citation type="journal article" date="2006" name="J. Physiol. (Lond.)">
        <title>Ca2+-calmodulin-dependent myosin light chain kinase is essential for activation of TRPC5 channels expressed in HEK293 cells.</title>
        <authorList>
            <person name="Shimizu S."/>
            <person name="Yoshida T."/>
            <person name="Wakamori M."/>
            <person name="Ishii M."/>
            <person name="Okada T."/>
            <person name="Takahashi M."/>
            <person name="Seto M."/>
            <person name="Sakurada K."/>
            <person name="Kiuchi Y."/>
            <person name="Mori Y."/>
        </authorList>
    </citation>
    <scope>FUNCTION IN TRPC5 REGULATION</scope>
    <scope>ACTIVITY REGULATION</scope>
    <scope>CATALYTIC ACTIVITY</scope>
</reference>
<reference key="21">
    <citation type="journal article" date="2008" name="Cancer Lett.">
        <title>Myosin light-chain kinase contributes to the proliferation and migration of breast cancer cells through cross-talk with activated ERK1/2.</title>
        <authorList>
            <person name="Zhou X."/>
            <person name="Liu Y."/>
            <person name="You J."/>
            <person name="Zhang H."/>
            <person name="Zhang X."/>
            <person name="Ye L."/>
        </authorList>
    </citation>
    <scope>FUNCTION IN CELL MIGRATION</scope>
</reference>
<reference key="22">
    <citation type="journal article" date="2008" name="J. Proteome Res.">
        <title>Phosphoproteome of resting human platelets.</title>
        <authorList>
            <person name="Zahedi R.P."/>
            <person name="Lewandrowski U."/>
            <person name="Wiesner J."/>
            <person name="Wortelkamp S."/>
            <person name="Moebius J."/>
            <person name="Schuetz C."/>
            <person name="Walter U."/>
            <person name="Gambaryan S."/>
            <person name="Sickmann A."/>
        </authorList>
    </citation>
    <scope>PHOSPHORYLATION [LARGE SCALE ANALYSIS] AT SER-1438</scope>
    <scope>IDENTIFICATION BY MASS SPECTROMETRY [LARGE SCALE ANALYSIS]</scope>
    <source>
        <tissue>Platelet</tissue>
    </source>
</reference>
<reference key="23">
    <citation type="journal article" date="2008" name="Nat. Immunol.">
        <title>Nonmuscle myosin light-chain kinase mediates neutrophil transmigration in sepsis-induced lung inflammation by activating beta2 integrins.</title>
        <authorList>
            <person name="Xu J."/>
            <person name="Gao X.-P."/>
            <person name="Ramchandran R."/>
            <person name="Zhao Y.-Y."/>
            <person name="Vogel S.M."/>
            <person name="Malik A.B."/>
        </authorList>
    </citation>
    <scope>FUNCTION AS PTK2B/PYK2 KINASE</scope>
    <scope>INTERACTION WITH PTK2B/PYK2</scope>
</reference>
<reference key="24">
    <citation type="journal article" date="2008" name="Proteomics">
        <title>Large-scale phosphoproteome analysis of human liver tissue by enrichment and fractionation of phosphopeptides with strong anion exchange chromatography.</title>
        <authorList>
            <person name="Han G."/>
            <person name="Ye M."/>
            <person name="Zhou H."/>
            <person name="Jiang X."/>
            <person name="Feng S."/>
            <person name="Jiang X."/>
            <person name="Tian R."/>
            <person name="Wan D."/>
            <person name="Zou H."/>
            <person name="Gu J."/>
        </authorList>
    </citation>
    <scope>PHOSPHORYLATION [LARGE SCALE ANALYSIS] AT SER-1438</scope>
    <scope>IDENTIFICATION BY MASS SPECTROMETRY [LARGE SCALE ANALYSIS]</scope>
    <source>
        <tissue>Liver</tissue>
    </source>
</reference>
<reference key="25">
    <citation type="journal article" date="2009" name="Anal. Chem.">
        <title>Lys-N and trypsin cover complementary parts of the phosphoproteome in a refined SCX-based approach.</title>
        <authorList>
            <person name="Gauci S."/>
            <person name="Helbig A.O."/>
            <person name="Slijper M."/>
            <person name="Krijgsveld J."/>
            <person name="Heck A.J."/>
            <person name="Mohammed S."/>
        </authorList>
    </citation>
    <scope>IDENTIFICATION BY MASS SPECTROMETRY [LARGE SCALE ANALYSIS]</scope>
</reference>
<reference key="26">
    <citation type="journal article" date="2009" name="J. Steroid Biochem. Mol. Biol.">
        <title>Androgens down-regulate myosin light chain kinase in human prostate cancer cells.</title>
        <authorList>
            <person name="Leveille N."/>
            <person name="Fournier A."/>
            <person name="Labrie C."/>
        </authorList>
    </citation>
    <scope>INDUCTION BY ANDROGENS</scope>
</reference>
<reference key="27">
    <citation type="journal article" date="2009" name="PLoS ONE">
        <title>Arrest defective-1 controls tumor cell behavior by acetylating myosin light chain kinase.</title>
        <authorList>
            <person name="Shin D.H."/>
            <person name="Chun Y.-S."/>
            <person name="Lee K.-H."/>
            <person name="Shin H.-W."/>
            <person name="Park J.-W."/>
        </authorList>
    </citation>
    <scope>FUNCTION IN TUMOR CELL MIGRATION</scope>
    <scope>ACETYLATION AT LYS-608 BY NAA10/ARD1</scope>
    <scope>INTERACTION WITH NAA10/ARD1</scope>
    <scope>MUTAGENESIS OF LYS-608</scope>
</reference>
<reference key="28">
    <citation type="journal article" date="2010" name="Acta Pharmacol. Sin.">
        <title>Myosin light chain kinase is responsible for high proliferative ability of breast cancer cells via anti-apoptosis involving p38 pathway.</title>
        <authorList>
            <person name="Cui W.-J."/>
            <person name="Liu Y."/>
            <person name="Zhou X.-L."/>
            <person name="Wang F.-Z."/>
            <person name="Zhang X.-D."/>
            <person name="Ye L.-H."/>
        </authorList>
    </citation>
    <scope>FUNCTION IN BREAST CANCER</scope>
</reference>
<reference key="29">
    <citation type="journal article" date="2010" name="Invest. Ophthalmol. Vis. Sci.">
        <title>Modulation of factors affecting optic nerve head astrocyte migration.</title>
        <authorList>
            <person name="Miao H."/>
            <person name="Crabb A.W."/>
            <person name="Hernandez M.R."/>
            <person name="Lukas T.J."/>
        </authorList>
    </citation>
    <scope>FUNCTION IN OPTIC NERVE HEAD ASTROCYTE MIGRATION</scope>
</reference>
<reference key="30">
    <citation type="journal article" date="2010" name="Microvasc. Res.">
        <title>Quantitative distribution and colocalization of non-muscle myosin light chain kinase isoforms and cortactin in human lung endothelium.</title>
        <authorList>
            <person name="Brown M."/>
            <person name="Adyshev D."/>
            <person name="Bindokas V."/>
            <person name="Moitra J."/>
            <person name="Garcia J.G.N."/>
            <person name="Dudek S.M."/>
        </authorList>
    </citation>
    <scope>TISSUE SPECIFICITY</scope>
    <scope>INTERACTION WITH CTTN</scope>
    <scope>SUBCELLULAR LOCATION</scope>
</reference>
<reference key="31">
    <citation type="journal article" date="2010" name="Mol. Biol. Cell">
        <title>Abl tyrosine kinase phosphorylates nonmuscle Myosin light chain kinase to regulate endothelial barrier function.</title>
        <authorList>
            <person name="Dudek S.M."/>
            <person name="Chiang E.T."/>
            <person name="Camp S.M."/>
            <person name="Guo Y."/>
            <person name="Zhao J."/>
            <person name="Brown M.E."/>
            <person name="Singleton P.A."/>
            <person name="Wang L."/>
            <person name="Desai A."/>
            <person name="Arce F.T."/>
            <person name="Lal R."/>
            <person name="Van Eyk J.E."/>
            <person name="Imam S.Z."/>
            <person name="Garcia J.G.N."/>
        </authorList>
    </citation>
    <scope>PHOSPHORYLATION AT TYR-231; TYR-464; TYR-556; TYR-611; TYR-792; TYR-846; TYR-1449; TYR-1575 AND TYR-1635 BY ABL1</scope>
    <scope>INTERACTION WITH CTTN AND ABL1</scope>
</reference>
<reference key="32">
    <citation type="journal article" date="2010" name="Mol. Pharmacol.">
        <title>The angiotensin II type 1 receptor induces membrane blebbing by coupling to Rho A, Rho kinase, and myosin light chain kinase.</title>
        <authorList>
            <person name="Godin C.M."/>
            <person name="Ferguson S.S.G."/>
        </authorList>
    </citation>
    <scope>FUNCTION IN MEMBRANE BLEBBING</scope>
</reference>
<reference key="33">
    <citation type="journal article" date="2011" name="Am. J. Respir. Cell Mol. Biol.">
        <title>Non-muscle myosin light chain kinase isoform is a viable molecular target in acute inflammatory lung injury.</title>
        <authorList>
            <person name="Mirzapoiazova T."/>
            <person name="Moitra J."/>
            <person name="Moreno-Vinasco L."/>
            <person name="Sammani S."/>
            <person name="Turner J.R."/>
            <person name="Chiang E.T."/>
            <person name="Evenoski C."/>
            <person name="Wang T."/>
            <person name="Singleton P.A."/>
            <person name="Huang Y."/>
            <person name="Lussier Y.A."/>
            <person name="Watterson D.M."/>
            <person name="Dudek S.M."/>
            <person name="Garcia J.G.N."/>
        </authorList>
    </citation>
    <scope>FUNCTION IN INFLAMMATORY RESPONSE</scope>
</reference>
<reference key="34">
    <citation type="journal article" date="2011" name="Organometallics">
        <title>Organometallic pyridylnaphthalimide complexes as protein kinase inhibitors.</title>
        <authorList>
            <person name="Blanck S."/>
            <person name="Cruchter T."/>
            <person name="Vultur A."/>
            <person name="Riedel R."/>
            <person name="Harms K."/>
            <person name="Herlyn M."/>
            <person name="Meggers E."/>
        </authorList>
    </citation>
    <scope>ACTIVITY REGULATION</scope>
</reference>
<reference key="35">
    <citation type="journal article" date="2009" name="Am. J. Respir. Crit. Care Med.">
        <title>Myosin, transgelin, and myosin light chain kinase: expression and function in asthma.</title>
        <authorList>
            <person name="Leguillette R."/>
            <person name="Laviolette M."/>
            <person name="Bergeron C."/>
            <person name="Zitouni N."/>
            <person name="Kogut P."/>
            <person name="Solway J."/>
            <person name="Kachmar L."/>
            <person name="Hamid Q."/>
            <person name="Lauzon A.-M."/>
        </authorList>
    </citation>
    <scope>REVIEW ON ASTHMA</scope>
    <scope>INDUCTION BY ASTHMA</scope>
</reference>
<reference key="36">
    <citation type="journal article" date="2012" name="J. Mol. Med.">
        <title>An intronic MYLK variant associated with inflammatory lung disease regulates promoter activity of the smooth muscle myosin light chain kinase isoform.</title>
        <authorList>
            <person name="Han Y.J."/>
            <person name="Ma S.F."/>
            <person name="Wade M.S."/>
            <person name="Flores C."/>
            <person name="Garcia J.G."/>
        </authorList>
    </citation>
    <scope>ALTERNATIVE PROMOTER USAGE (ISOFORMS 5/9)</scope>
</reference>
<reference key="37">
    <citation type="journal article" date="2012" name="Proc. Natl. Acad. Sci. U.S.A.">
        <title>N-terminal acetylome analyses and functional insights of the N-terminal acetyltransferase NatB.</title>
        <authorList>
            <person name="Van Damme P."/>
            <person name="Lasa M."/>
            <person name="Polevoda B."/>
            <person name="Gazquez C."/>
            <person name="Elosegui-Artola A."/>
            <person name="Kim D.S."/>
            <person name="De Juan-Pardo E."/>
            <person name="Demeyer K."/>
            <person name="Hole K."/>
            <person name="Larrea E."/>
            <person name="Timmerman E."/>
            <person name="Prieto J."/>
            <person name="Arnesen T."/>
            <person name="Sherman F."/>
            <person name="Gevaert K."/>
            <person name="Aldabe R."/>
        </authorList>
    </citation>
    <scope>ACETYLATION [LARGE SCALE ANALYSIS] AT ALA-2 (ISOFORMS 6 AND 8)</scope>
    <scope>CLEAVAGE OF INITIATOR METHIONINE [LARGE SCALE ANALYSIS] (ISOFORM 6)</scope>
    <scope>CLEAVAGE OF INITIATOR METHIONINE [LARGE SCALE ANALYSIS] (ISOFORM 8)</scope>
    <scope>IDENTIFICATION BY MASS SPECTROMETRY [LARGE SCALE ANALYSIS]</scope>
</reference>
<reference key="38">
    <citation type="journal article" date="2014" name="J. Proteomics">
        <title>An enzyme assisted RP-RPLC approach for in-depth analysis of human liver phosphoproteome.</title>
        <authorList>
            <person name="Bian Y."/>
            <person name="Song C."/>
            <person name="Cheng K."/>
            <person name="Dong M."/>
            <person name="Wang F."/>
            <person name="Huang J."/>
            <person name="Sun D."/>
            <person name="Wang L."/>
            <person name="Ye M."/>
            <person name="Zou H."/>
        </authorList>
    </citation>
    <scope>PHOSPHORYLATION [LARGE SCALE ANALYSIS] AT SER-305; SER-1438; SER-1772; SER-1776 AND SER-1779</scope>
    <scope>IDENTIFICATION BY MASS SPECTROMETRY [LARGE SCALE ANALYSIS]</scope>
    <source>
        <tissue>Liver</tissue>
    </source>
</reference>
<reference key="39">
    <citation type="submission" date="2005-11" db="PDB data bank">
        <title>Solution structure of the eighth Ig-like domain of human myosin light chain kinase.</title>
        <authorList>
            <consortium name="RIKEN structural genomics initiative (RSGI)"/>
        </authorList>
    </citation>
    <scope>STRUCTURE BY NMR OF 1238-1338</scope>
</reference>
<reference key="40">
    <citation type="journal article" date="2008" name="Structure">
        <title>A coupled equilibrium shift mechanism in calmodulin-mediated signal transduction.</title>
        <authorList>
            <person name="Gsponer J."/>
            <person name="Christodoulou J."/>
            <person name="Cavalli A."/>
            <person name="Bui J.M."/>
            <person name="Richter B."/>
            <person name="Dobson C.M."/>
            <person name="Vendruscolo M."/>
        </authorList>
    </citation>
    <scope>STRUCTURE BY NMR OF 1742-1760 IN COMPLEX WITH CALMODULIN</scope>
</reference>
<reference key="41">
    <citation type="journal article" date="2007" name="Nature">
        <title>Patterns of somatic mutation in human cancer genomes.</title>
        <authorList>
            <person name="Greenman C."/>
            <person name="Stephens P."/>
            <person name="Smith R."/>
            <person name="Dalgliesh G.L."/>
            <person name="Hunter C."/>
            <person name="Bignell G."/>
            <person name="Davies H."/>
            <person name="Teague J."/>
            <person name="Butler A."/>
            <person name="Stevens C."/>
            <person name="Edkins S."/>
            <person name="O'Meara S."/>
            <person name="Vastrik I."/>
            <person name="Schmidt E.E."/>
            <person name="Avis T."/>
            <person name="Barthorpe S."/>
            <person name="Bhamra G."/>
            <person name="Buck G."/>
            <person name="Choudhury B."/>
            <person name="Clements J."/>
            <person name="Cole J."/>
            <person name="Dicks E."/>
            <person name="Forbes S."/>
            <person name="Gray K."/>
            <person name="Halliday K."/>
            <person name="Harrison R."/>
            <person name="Hills K."/>
            <person name="Hinton J."/>
            <person name="Jenkinson A."/>
            <person name="Jones D."/>
            <person name="Menzies A."/>
            <person name="Mironenko T."/>
            <person name="Perry J."/>
            <person name="Raine K."/>
            <person name="Richardson D."/>
            <person name="Shepherd R."/>
            <person name="Small A."/>
            <person name="Tofts C."/>
            <person name="Varian J."/>
            <person name="Webb T."/>
            <person name="West S."/>
            <person name="Widaa S."/>
            <person name="Yates A."/>
            <person name="Cahill D.P."/>
            <person name="Louis D.N."/>
            <person name="Goldstraw P."/>
            <person name="Nicholson A.G."/>
            <person name="Brasseur F."/>
            <person name="Looijenga L."/>
            <person name="Weber B.L."/>
            <person name="Chiew Y.-E."/>
            <person name="DeFazio A."/>
            <person name="Greaves M.F."/>
            <person name="Green A.R."/>
            <person name="Campbell P."/>
            <person name="Birney E."/>
            <person name="Easton D.F."/>
            <person name="Chenevix-Trench G."/>
            <person name="Tan M.-H."/>
            <person name="Khoo S.K."/>
            <person name="Teh B.T."/>
            <person name="Yuen S.T."/>
            <person name="Leung S.Y."/>
            <person name="Wooster R."/>
            <person name="Futreal P.A."/>
            <person name="Stratton M.R."/>
        </authorList>
    </citation>
    <scope>VARIANTS [LARGE SCALE ANALYSIS] ALA-261; ALA-276; HIS-378; VAL-405; SER-443; GLY-607; ALA-652; CYS-656; MET-692; THR-701; MET-709; VAL-1527 AND LEU-1588</scope>
</reference>
<reference key="42">
    <citation type="journal article" date="2010" name="Am. J. Hum. Genet.">
        <title>Mutations in myosin light chain kinase cause familial aortic dissections.</title>
        <authorList>
            <person name="Wang L."/>
            <person name="Guo D.C."/>
            <person name="Cao J."/>
            <person name="Gong L."/>
            <person name="Kamm K.E."/>
            <person name="Regalado E."/>
            <person name="Li L."/>
            <person name="Shete S."/>
            <person name="He W.Q."/>
            <person name="Zhu M.S."/>
            <person name="Offermanns S."/>
            <person name="Gilchrist D."/>
            <person name="Elefteriades J."/>
            <person name="Stull J.T."/>
            <person name="Milewicz D.M."/>
        </authorList>
    </citation>
    <scope>VARIANTS AAT7 MET-1213; THR-1754 AND PRO-1759</scope>
    <scope>VARIANTS VAL-128; HIS-133; ARG-160; CYS-656; ALA-1085 AND LYS-1399</scope>
    <scope>CHARACTERIZATION OF VARIANTS AAT7 THR-1754 AND PRO-1759</scope>
</reference>
<reference key="43">
    <citation type="journal article" date="2017" name="Clin. Genet.">
        <title>Two novel MYLK nonsense mutations causing thoracic aortic aneurysms/dissections in patients without apparent family history.</title>
        <authorList>
            <person name="Luyckx I."/>
            <person name="Proost D."/>
            <person name="Hendriks J.M.H."/>
            <person name="Saenen J."/>
            <person name="Van Craenenbroeck E.M."/>
            <person name="Vermeulen T."/>
            <person name="Peeters N."/>
            <person name="Wuyts W."/>
            <person name="Rodrigus I."/>
            <person name="Verstraeten A."/>
            <person name="Van Laer L."/>
            <person name="Loeys B.L."/>
        </authorList>
    </citation>
    <scope>VARIANTS AAT7 1458-GLN--GLU-1914 DEL AND 1487-ARG--GLU-1914 DEL</scope>
</reference>
<reference key="44">
    <citation type="journal article" date="2018" name="Clin. Genet.">
        <authorList>
            <person name="Luyckx I."/>
            <person name="Proost D."/>
            <person name="Hendriks J.M.H."/>
            <person name="Saenen J."/>
            <person name="Van Craenenbroeck E.M."/>
            <person name="Vermeulen T."/>
            <person name="Peeters N."/>
            <person name="Wuyts W."/>
            <person name="Rodrigus I."/>
            <person name="Verstraeten A."/>
            <person name="Van Laer L."/>
            <person name="Loeys B.L."/>
        </authorList>
    </citation>
    <scope>ERRATUM OF PUBMED:28401540</scope>
</reference>
<reference key="45">
    <citation type="journal article" date="2018" name="Orphanet J. Rare Dis.">
        <title>Fatal thoracic aortic aneurysm and dissection in a large family with a novel MYLK gene mutation: delineation of the clinical phenotype.</title>
        <authorList>
            <person name="Shalata A."/>
            <person name="Mahroom M."/>
            <person name="Milewicz D.M."/>
            <person name="Limin G."/>
            <person name="Kassum F."/>
            <person name="Badarna K."/>
            <person name="Tarabeih N."/>
            <person name="Assy N."/>
            <person name="Fell R."/>
            <person name="Cohen H."/>
            <person name="Nashashibi M."/>
            <person name="Livoff A."/>
            <person name="Azab M."/>
            <person name="Habib G."/>
            <person name="Geiger D."/>
            <person name="Weissbrod O."/>
            <person name="Nseir W."/>
        </authorList>
    </citation>
    <scope>VARIANT AAT7 SER-1491</scope>
    <scope>CHARACTERIZATION OF VARIANT AAT7 SER-1491</scope>
    <scope>BIOPHYSICOCHEMICAL PROPERTIES</scope>
</reference>
<reference key="46">
    <citation type="journal article" date="2017" name="Am. J. Hum. Genet.">
        <title>Loss-of-Function Variants in MYLK Cause Recessive Megacystis Microcolon Intestinal Hypoperistalsis Syndrome.</title>
        <authorList>
            <person name="Halim D."/>
            <person name="Brosens E."/>
            <person name="Muller F."/>
            <person name="Wangler M.F."/>
            <person name="Beaudet A.L."/>
            <person name="Lupski J.R."/>
            <person name="Akdemir Z.H.C."/>
            <person name="Doukas M."/>
            <person name="Stoop H.J."/>
            <person name="de Graaf B.M."/>
            <person name="Brouwer R.W.W."/>
            <person name="van Ijcken W.F.J."/>
            <person name="Oury J.F."/>
            <person name="Rosenblatt J."/>
            <person name="Burns A.J."/>
            <person name="Tibboel D."/>
            <person name="Hofstra R.M.W."/>
            <person name="Alves M.M."/>
        </authorList>
    </citation>
    <scope>INVOLVEMENT IN MMIHS</scope>
</reference>
<sequence>MGDVKLVASSHISKTSLSVDPSRVDSMPLTEAPAFILPPRNLCIKEGATAKFEGRVRGYPEPQVTWHRNGQPITSGGRFLLDCGIRGTFSLVIHAVHEEDRGKYTCEATNGSGARQVTVELTVEGSFAKQLGQPVVSKTLGDRFSAPAVETRPSIWGECPPKFATKLGRVVVKEGQMGRFSCKITGRPQPQVTWLKGNVPLQPSARVSVSEKNGMQVLEIHGVNQDDVGVYTCLVVNGSGKASMSAELSIQGLDSANRSFVRETKATNSDVRKEVTNVISKESKLDSLEAAAKSKNCSSPQRGGSPPWAANSQPQPPRESKLESCKDSPRTAPQTPVLQKTSSSITLQAARVQPEPRAPGLGVLSPSGEERKRPAPPRPATFPTRQPGLGSQDVVSKAANRRIPMEGQRDSAFPKFESKPQSQEVKENQTVKFRCEVSGIPKPEVAWFLEGTPVRRQEGSIEVYEDAGSHYLCLLKARTRDSGTYSCTASNAQGQLSCSWTLQVERLAVMEVAPSFSSVLKDCAVIEGQDFVLQCSVRGTPVPRITWLLNGQPIQYARSTCEAGVAELHIQDALPEDHGTYTCLAENALGQVSCSAWVTVHEKKSSRKSEYLLPVAPSKPTAPIFLQGLSDLKVMDGSQVTMTVQVSGNPPPEVIWLHNGNEIQESEDFHFEQRGTQHSLCIQEVFPEDTGTYTCEAWNSAGEVRTQAVLTVQEPHDGTQPWFISKPRSVTASLGQSVLISCAIAGDPFPTVHWLRDGKALCKDTGHFEVLQNEDVFTLVLKKVQPWHAGQYEILLKNRVGECSCQVSLMLQNSSARALPRGREPASCEDLCGGGVGADGGGSDRYGSLRPGWPARGQGWLEEEDGEDVRGVLKRRVETRQHTEEAIRQQEVEQLDFRDLLGKKVSTKTLSEDDLKEIPAEQMDFRANLQRQVKPKTVSEEERKVHSPQQVDFRSVLAKKGTSKTPVPEKVPPPKPATPDFRSVLGGKKKLPAENGSSSAETLNAKAVESSKPLSNAQPSGPLKPVGNAKPAETLKPMGNAKPAETLKPMGNAKPDENLKSASKEELKKDVKNDVNCKRGHAGTTDNEKRSESQGTAPAFKQKLQDVHVAEGKKLLLQCQVSSDPPATIIWTLNGKTLKTTKFIILSQEGSLCSVSIEKALPEDRGLYKCVAKNDAGQAECSCQVTVDDAPASENTKAPEMKSRRPKSSLPPVLGTESDATVKKKPAPKTPPKAAMPPQIIQFPEDQKVRAGESVELFGKVTGTQPITCTWMKFRKQIQESEHMKVENSENGSKLTILAARQEHCGCYTLLVENKLGSRQAQVNLTVVDKPDPPAGTPCASDIRSSSLTLSWYGSSYDGGSAVQSYSIEIWDSANKTWKELATCRSTSFNVQDLLPDHEYKFRVRAINVYGTSEPSQESELTTVGEKPEEPKDEVEVSDDDEKEPEVDYRTVTINTEQKVSDFYDIEERLGSGKFGQVFRLVEKKTRKVWAGKFFKAYSAKEKENIRQEISIMNCLHHPKLVQCVDAFEEKANIVMVLEIVSGGELFERIIDEDFELTERECIKYMRQISEGVEYIHKQGIVHLDLKPENIMCVNKTGTRIKLIDFGLARRLENAGSLKVLFGTPEFVAPEVINYEPIGYATDMWSIGVICYILVSGLSPFMGDNDNETLANVTSATWDFDDEAFDEISDDAKDFISNLLKKDMKNRLDCTQCLQHPWLMKDTKNMEAKKLSKDRMKKYMARRKWQKTGNAVRAIGRLSSMAMISGLSGRKSSTGSPTSPLNAEKLESEEDVSQAFLEAVAEEKPHVKPYFSKTIRDLEVVEGSAARFDCKIEGYPDPEVVWFKDDQSIRESRHFQIDYDEDGNCSLIISDVCGDDDAKYTCKAVNSLGEATCTAELIVETMEEGEGEGEEEEE</sequence>